<reference key="1">
    <citation type="journal article" date="1991" name="Oncogene">
        <title>The sequences of the human and mouse c-cbl proto-oncogenes show v-cbl was generated by a large truncation encompassing a proline-rich domain and a leucine zipper-like motif.</title>
        <authorList>
            <person name="Blake T.J."/>
            <person name="Shapiro M."/>
            <person name="Morse H.C. III"/>
            <person name="Langdon W.Y."/>
        </authorList>
    </citation>
    <scope>NUCLEOTIDE SEQUENCE [MRNA]</scope>
</reference>
<reference key="2">
    <citation type="journal article" date="2006" name="Nature">
        <title>Human chromosome 11 DNA sequence and analysis including novel gene identification.</title>
        <authorList>
            <person name="Taylor T.D."/>
            <person name="Noguchi H."/>
            <person name="Totoki Y."/>
            <person name="Toyoda A."/>
            <person name="Kuroki Y."/>
            <person name="Dewar K."/>
            <person name="Lloyd C."/>
            <person name="Itoh T."/>
            <person name="Takeda T."/>
            <person name="Kim D.-W."/>
            <person name="She X."/>
            <person name="Barlow K.F."/>
            <person name="Bloom T."/>
            <person name="Bruford E."/>
            <person name="Chang J.L."/>
            <person name="Cuomo C.A."/>
            <person name="Eichler E."/>
            <person name="FitzGerald M.G."/>
            <person name="Jaffe D.B."/>
            <person name="LaButti K."/>
            <person name="Nicol R."/>
            <person name="Park H.-S."/>
            <person name="Seaman C."/>
            <person name="Sougnez C."/>
            <person name="Yang X."/>
            <person name="Zimmer A.R."/>
            <person name="Zody M.C."/>
            <person name="Birren B.W."/>
            <person name="Nusbaum C."/>
            <person name="Fujiyama A."/>
            <person name="Hattori M."/>
            <person name="Rogers J."/>
            <person name="Lander E.S."/>
            <person name="Sakaki Y."/>
        </authorList>
    </citation>
    <scope>NUCLEOTIDE SEQUENCE [LARGE SCALE GENOMIC DNA]</scope>
</reference>
<reference key="3">
    <citation type="journal article" date="2004" name="Genome Res.">
        <title>The status, quality, and expansion of the NIH full-length cDNA project: the Mammalian Gene Collection (MGC).</title>
        <authorList>
            <consortium name="The MGC Project Team"/>
        </authorList>
    </citation>
    <scope>NUCLEOTIDE SEQUENCE [LARGE SCALE MRNA]</scope>
</reference>
<reference key="4">
    <citation type="journal article" date="1994" name="J. Biol. Chem.">
        <title>The protein product of the c-cbl protooncogene is the 120-kDa tyrosine-phosphorylated protein in Jurkat cells activated via the T cell antigen receptor.</title>
        <authorList>
            <person name="Donovan J.A."/>
            <person name="Wange R.L."/>
            <person name="Langdon W.Y."/>
            <person name="Samelson L.E."/>
        </authorList>
    </citation>
    <scope>INTERACTION WITH BLK</scope>
</reference>
<reference key="5">
    <citation type="journal article" date="1995" name="J. Biol. Chem.">
        <title>Tyrosine phosphorylation of the c-cbl proto-oncogene protein product and association with epidermal growth factor (EGF) receptor upon EGF stimulation.</title>
        <authorList>
            <person name="Galisteo M.L."/>
            <person name="Dikic I."/>
            <person name="Batzer A.G."/>
            <person name="Langdon W.Y."/>
            <person name="Schlessinger J."/>
        </authorList>
    </citation>
    <scope>PHOSPHORYLATION BY EGFR</scope>
    <scope>INTERACTION WITH EGFR</scope>
</reference>
<reference key="6">
    <citation type="journal article" date="1997" name="J. Biol. Chem.">
        <title>The Cbl phosphotyrosine-binding domain selects a D(N/D)XpY motif and binds to the Tyr292 negative regulatory phosphorylation site of ZAP-70.</title>
        <authorList>
            <person name="Lupher M.L. Jr."/>
            <person name="Songyang Z."/>
            <person name="Shoelson S.E."/>
            <person name="Cantley L.C."/>
            <person name="Band H."/>
        </authorList>
    </citation>
    <scope>INTERACTION WITH ZAP70</scope>
</reference>
<reference key="7">
    <citation type="journal article" date="1998" name="J. Biol. Chem.">
        <title>Coordinated regulation of the tyrosine phosphorylation of Cbl by Fyn and Syk tyrosine kinases.</title>
        <authorList>
            <person name="Deckert M."/>
            <person name="Elly C."/>
            <person name="Altman A."/>
            <person name="Liu Y.C."/>
        </authorList>
    </citation>
    <scope>PHOSPHORYLATION BY SYK AND FYN</scope>
</reference>
<reference key="8">
    <citation type="journal article" date="1999" name="Biochem. Biophys. Res. Commun.">
        <title>The proto-oncogene p120(Cbl) is a downstream substrate of the Hck protein-tyrosine kinase.</title>
        <authorList>
            <person name="Howlett C.J."/>
            <person name="Bisson S.A."/>
            <person name="Resek M.E."/>
            <person name="Tigley A.W."/>
            <person name="Robbins S.M."/>
        </authorList>
    </citation>
    <scope>PHOSPHORYLATION BY HCK</scope>
    <scope>INTERACTION WITH HCK</scope>
</reference>
<reference key="9">
    <citation type="journal article" date="1999" name="Leukemia">
        <title>APS, an adaptor protein containing pleckstrin homology (PH) and Src homology-2 (SH2) domains inhibits the JAK-STAT pathway in collaboration with c-Cbl.</title>
        <authorList>
            <person name="Wakioka T."/>
            <person name="Sasaki A."/>
            <person name="Mitsui K."/>
            <person name="Yokouchi M."/>
            <person name="Inoue A."/>
            <person name="Komiya S."/>
            <person name="Yoshimura A."/>
        </authorList>
    </citation>
    <scope>INTERACTION WITH SH2B2</scope>
</reference>
<reference key="10">
    <citation type="journal article" date="1999" name="Oncogene">
        <title>APS, an adaptor protein containing PH and SH2 domains, is associated with the PDGF receptor and c-Cbl and inhibits PDGF-induced mitogenesis.</title>
        <authorList>
            <person name="Yokouchi M."/>
            <person name="Wakioka T."/>
            <person name="Sakamoto H."/>
            <person name="Yasukawa H."/>
            <person name="Ohtsuka S."/>
            <person name="Sasaki A."/>
            <person name="Ohtsubo M."/>
            <person name="Valius M."/>
            <person name="Inoue A."/>
            <person name="Komiya S."/>
            <person name="Yoshimura A."/>
        </authorList>
    </citation>
    <scope>INTERACTION WITH SH2B2</scope>
</reference>
<reference key="11">
    <citation type="journal article" date="1999" name="Proc. Natl. Acad. Sci. U.S.A.">
        <title>SLAP, a dimeric adapter protein, plays a functional role in T cell receptor signaling.</title>
        <authorList>
            <person name="Tang J."/>
            <person name="Sawasdikosol S."/>
            <person name="Chang J.-H."/>
            <person name="Burakoff S.J."/>
        </authorList>
    </citation>
    <scope>INTERACTION WITH SLA AND ZAP70</scope>
    <scope>MUTAGENESIS OF GLY-306</scope>
</reference>
<reference key="12">
    <citation type="journal article" date="1999" name="Science">
        <title>The tyrosine kinase negative regulator c-Cbl as a RING-type, E2-dependent ubiquitin-protein ligase.</title>
        <authorList>
            <person name="Joazeiro C.A."/>
            <person name="Wing S.S."/>
            <person name="Huang H.-K."/>
            <person name="Leverson J.D."/>
            <person name="Hunter T."/>
            <person name="Liu Y.-C."/>
        </authorList>
    </citation>
    <scope>FUNCTION</scope>
    <scope>CATALYTIC ACTIVITY</scope>
</reference>
<reference key="13">
    <citation type="journal article" date="2001" name="J. Biol. Chem.">
        <title>The adapter type protein CMS/CD2AP binds to the proto-oncogenic protein c-Cbl through a tyrosine phosphorylation-regulated Src homology 3 domain interaction.</title>
        <authorList>
            <person name="Kirsch K.H."/>
            <person name="Georgescu M.M."/>
            <person name="Shishido T."/>
            <person name="Langdon W.Y."/>
            <person name="Birge R.B."/>
            <person name="Hanafusa H."/>
        </authorList>
    </citation>
    <scope>INTERACTION WITH CD2AP</scope>
</reference>
<reference key="14">
    <citation type="journal article" date="2001" name="J. Exp. Med.">
        <title>Functional cloning of Src-like adapter protein-2 (SLAP-2), a novel inhibitor of antigen receptor signaling.</title>
        <authorList>
            <person name="Holland S.J."/>
            <person name="Liao X.C."/>
            <person name="Mendenhall M.K."/>
            <person name="Zhou X."/>
            <person name="Pardo J."/>
            <person name="Chu P."/>
            <person name="Spencer C."/>
            <person name="Fu A.C."/>
            <person name="Sheng N."/>
            <person name="Yu P."/>
            <person name="Pali E."/>
            <person name="Nagin A."/>
            <person name="Shen M."/>
            <person name="Yu S."/>
            <person name="Chan E."/>
            <person name="Wu X."/>
            <person name="Li C."/>
            <person name="Woisetschlager M."/>
            <person name="Aversa G."/>
            <person name="Kolbinger F."/>
            <person name="Bennett M.K."/>
            <person name="Molineaux S."/>
            <person name="Luo Y."/>
            <person name="Payan D.G."/>
            <person name="Mancebo H.S.Y."/>
            <person name="Wu J."/>
        </authorList>
    </citation>
    <scope>INTERACTION WITH SLA2</scope>
</reference>
<reference key="15">
    <citation type="journal article" date="2002" name="J. Exp. Med.">
        <title>Non-T cell activation linker (NTAL): a transmembrane adaptor protein involved in immunoreceptor signaling.</title>
        <authorList>
            <person name="Brdicka T."/>
            <person name="Imrich M."/>
            <person name="Angelisova P."/>
            <person name="Brdickova N."/>
            <person name="Horvath O."/>
            <person name="Spicka J."/>
            <person name="Hilgert I."/>
            <person name="Luskova P."/>
            <person name="Draber P."/>
            <person name="Novak P."/>
            <person name="Engels N."/>
            <person name="Wienands J."/>
            <person name="Simeoni L."/>
            <person name="Oesterreicher J."/>
            <person name="Aguado E."/>
            <person name="Malissen M."/>
            <person name="Schraven B."/>
            <person name="Horejsi V."/>
        </authorList>
    </citation>
    <scope>INTERACTION WITH LAT2</scope>
</reference>
<reference key="16">
    <citation type="journal article" date="2002" name="Mol. Cell. Biol.">
        <title>APS facilitates c-Cbl tyrosine phosphorylation and GLUT4 translocation in response to insulin in 3T3-L1 adipocytes.</title>
        <authorList>
            <person name="Liu J."/>
            <person name="Kimura A."/>
            <person name="Baumann C.A."/>
            <person name="Saltiel A.R."/>
        </authorList>
    </citation>
    <scope>INTERACTION WITH SH2B2</scope>
    <scope>MUTAGENESIS OF TYR-371; TYR-700; TYR-731 AND TYR-774</scope>
    <scope>PHOSPHORYLATION AT TYR-371; TYR-700 AND TYR-774</scope>
</reference>
<reference key="17">
    <citation type="journal article" date="2002" name="Oncogene">
        <title>Membrane-anchored Cbl suppresses Hck protein-tyrosine kinase mediated cellular transformation.</title>
        <authorList>
            <person name="Howlett C.J."/>
            <person name="Robbins S.M."/>
        </authorList>
    </citation>
    <scope>FUNCTION</scope>
    <scope>SUBCELLULAR LOCATION</scope>
    <scope>UBIQUITINATION</scope>
    <scope>MUTAGENESIS OF CYS-381</scope>
    <scope>INTERACTION WITH HCK</scope>
</reference>
<reference key="18">
    <citation type="journal article" date="2002" name="Oncogene">
        <title>C-Cbl binds the CSF-1 receptor at tyrosine 973, a novel phosphorylation site in the receptor's carboxy-terminus.</title>
        <authorList>
            <person name="Wilhelmsen K."/>
            <person name="Burkhalter S."/>
            <person name="van der Geer P."/>
        </authorList>
    </citation>
    <scope>INTERACTION WITH CSF1R</scope>
    <scope>PHOSPHORYLATION</scope>
</reference>
<reference key="19">
    <citation type="journal article" date="2003" name="Biochem. Biophys. Res. Commun.">
        <title>The c-Cbl-associated protein and c-Cbl are two new partners of the SH2-containing inositol polyphosphate 5-phosphatase SHIP2.</title>
        <authorList>
            <person name="Vandenbroere I."/>
            <person name="Paternotte N."/>
            <person name="Dumont J.E."/>
            <person name="Erneux C."/>
            <person name="Pirson I."/>
        </authorList>
    </citation>
    <scope>INTERACTION WITH INPPL1</scope>
</reference>
<reference key="20">
    <citation type="journal article" date="2003" name="Biochem. J.">
        <title>Fgr but not Syk tyrosine kinase is a target for beta 2 integrin-induced c-Cbl-mediated ubiquitination in adherent human neutrophils.</title>
        <authorList>
            <person name="Melander F."/>
            <person name="Andersson T."/>
            <person name="Dib K."/>
        </authorList>
    </citation>
    <scope>INTERACTION WITH FGR</scope>
    <scope>PHOSPHORYLATION BY FGR</scope>
</reference>
<reference key="21">
    <citation type="journal article" date="2003" name="Proc. Natl. Acad. Sci. U.S.A.">
        <title>Profiling of tyrosine phosphorylation pathways in human cells using mass spectrometry.</title>
        <authorList>
            <person name="Salomon A.R."/>
            <person name="Ficarro S.B."/>
            <person name="Brill L.M."/>
            <person name="Brinker A."/>
            <person name="Phung Q.T."/>
            <person name="Ericson C."/>
            <person name="Sauer K."/>
            <person name="Brock A."/>
            <person name="Horn D.M."/>
            <person name="Schultz P.G."/>
            <person name="Peters E.C."/>
        </authorList>
    </citation>
    <scope>IDENTIFICATION BY MASS SPECTROMETRY [LARGE SCALE ANALYSIS]</scope>
</reference>
<reference key="22">
    <citation type="journal article" date="2004" name="Anal. Chem.">
        <title>Robust phosphoproteomic profiling of tyrosine phosphorylation sites from human T cells using immobilized metal affinity chromatography and tandem mass spectrometry.</title>
        <authorList>
            <person name="Brill L.M."/>
            <person name="Salomon A.R."/>
            <person name="Ficarro S.B."/>
            <person name="Mukherji M."/>
            <person name="Stettler-Gill M."/>
            <person name="Peters E.C."/>
        </authorList>
    </citation>
    <scope>IDENTIFICATION BY MASS SPECTROMETRY [LARGE SCALE ANALYSIS]</scope>
    <source>
        <tissue>Leukemic T-cell</tissue>
    </source>
</reference>
<reference key="23">
    <citation type="journal article" date="2004" name="Cell. Mol. Life Sci.">
        <title>Signal transduction via the stem cell factor receptor/c-Kit.</title>
        <authorList>
            <person name="Ronnstrand L."/>
        </authorList>
    </citation>
    <scope>REVIEW ON ROLE IN KIT SIGNALING AND KIT DEGRADATION</scope>
</reference>
<reference key="24">
    <citation type="journal article" date="2004" name="FEBS Lett.">
        <title>Catalytic domains of tyrosine kinases determine the phosphorylation sites within c-Cbl.</title>
        <authorList>
            <person name="Grossmann A.H."/>
            <person name="Kolibaba K.S."/>
            <person name="Willis S.G."/>
            <person name="Corbin A.S."/>
            <person name="Langdon W.S."/>
            <person name="Deininger M.W."/>
            <person name="Druker B.J."/>
        </authorList>
    </citation>
    <scope>PHOSPHORYLATION AT TYR-700</scope>
</reference>
<reference key="25">
    <citation type="journal article" date="2004" name="J. Biol. Chem.">
        <title>Cbl-mediated degradation of Lyn and Fyn induced by constitutive fibroblast growth factor receptor-2 activation supports osteoblast differentiation.</title>
        <authorList>
            <person name="Kaabeche K."/>
            <person name="Lemonnier J."/>
            <person name="Le Mee S."/>
            <person name="Caverzasio J."/>
            <person name="Marie P.J."/>
        </authorList>
    </citation>
    <scope>FUNCTION</scope>
    <scope>PHOSPHORYLATION</scope>
    <scope>INTERACTION WITH FGFR2; LYN AND FYN</scope>
</reference>
<reference key="26">
    <citation type="journal article" date="2004" name="J. Biol. Chem.">
        <title>Src kinase activity is essential for osteoclast function.</title>
        <authorList>
            <person name="Miyazaki T."/>
            <person name="Sanjay A."/>
            <person name="Neff L."/>
            <person name="Tanaka S."/>
            <person name="Horne W.C."/>
            <person name="Baron R."/>
        </authorList>
    </citation>
    <scope>FUNCTION</scope>
    <scope>PHOSPHORYLATION AT TYR-731</scope>
    <scope>MUTAGENESIS OF TYR-731</scope>
</reference>
<reference key="27">
    <citation type="journal article" date="2004" name="J. Cell Sci.">
        <title>ALK receptor tyrosine kinase promotes cell growth and neurite outgrowth.</title>
        <authorList>
            <person name="Motegi A."/>
            <person name="Fujimoto J."/>
            <person name="Kotani M."/>
            <person name="Sakuraba H."/>
            <person name="Yamamoto T."/>
        </authorList>
    </citation>
    <scope>INTERACTION WITH ALK</scope>
    <scope>PHOSPHORYLATION BY ALK</scope>
</reference>
<reference key="28">
    <citation type="journal article" date="2004" name="Oncogene">
        <title>Cbl-c suppresses v-Src-induced transformation through ubiquitin-dependent protein degradation.</title>
        <authorList>
            <person name="Kim M."/>
            <person name="Tezuka T."/>
            <person name="Tanaka K."/>
            <person name="Yamamoto T."/>
        </authorList>
    </citation>
    <scope>FUNCTION</scope>
    <scope>CATALYTIC ACTIVITY</scope>
</reference>
<reference key="29">
    <citation type="journal article" date="2005" name="Biochem. Biophys. Res. Commun.">
        <title>Signaling by Kit protein-tyrosine kinase--the stem cell factor receptor.</title>
        <authorList>
            <person name="Roskoski R. Jr."/>
        </authorList>
    </citation>
    <scope>REVIEW ON ROLE IN KIT SIGNALING AND KIT DEGRADATION</scope>
</reference>
<reference key="30">
    <citation type="journal article" date="2005" name="Biochem. Biophys. Res. Commun.">
        <title>Effects of Gas6 and hydrogen peroxide in Axl ubiquitination and downregulation.</title>
        <authorList>
            <person name="Valverde P."/>
        </authorList>
    </citation>
    <scope>INTERACTION WITH AXL</scope>
</reference>
<reference key="31">
    <citation type="journal article" date="2005" name="Nat. Biotechnol.">
        <title>Immunoaffinity profiling of tyrosine phosphorylation in cancer cells.</title>
        <authorList>
            <person name="Rush J."/>
            <person name="Moritz A."/>
            <person name="Lee K.A."/>
            <person name="Guo A."/>
            <person name="Goss V.L."/>
            <person name="Spek E.J."/>
            <person name="Zhang H."/>
            <person name="Zha X.-M."/>
            <person name="Polakiewicz R.D."/>
            <person name="Comb M.J."/>
        </authorList>
    </citation>
    <scope>IDENTIFICATION BY MASS SPECTROMETRY [LARGE SCALE ANALYSIS]</scope>
</reference>
<reference key="32">
    <citation type="journal article" date="2006" name="Biochem. Biophys. Res. Commun.">
        <title>Spred-2 steady-state levels are regulated by phosphorylation and Cbl-mediated ubiquitination.</title>
        <authorList>
            <person name="Lock P."/>
            <person name="I S.T.T."/>
            <person name="Straffon A.F."/>
            <person name="Schieb H."/>
            <person name="Hovens C.M."/>
            <person name="Stylli S.S."/>
        </authorList>
    </citation>
    <scope>FUNCTION</scope>
    <scope>MUTAGENESIS OF GLY-306</scope>
</reference>
<reference key="33">
    <citation type="journal article" date="2006" name="Nat. Biotechnol.">
        <title>A probability-based approach for high-throughput protein phosphorylation analysis and site localization.</title>
        <authorList>
            <person name="Beausoleil S.A."/>
            <person name="Villen J."/>
            <person name="Gerber S.A."/>
            <person name="Rush J."/>
            <person name="Gygi S.P."/>
        </authorList>
    </citation>
    <scope>PHOSPHORYLATION [LARGE SCALE ANALYSIS] AT SER-900</scope>
    <scope>IDENTIFICATION BY MASS SPECTROMETRY [LARGE SCALE ANALYSIS]</scope>
    <source>
        <tissue>Cervix carcinoma</tissue>
    </source>
</reference>
<reference key="34">
    <citation type="journal article" date="2007" name="FEBS J.">
        <title>The localization of FGFR3 mutations causing thanatophoric dysplasia type I differentially affects phosphorylation, processing and ubiquitylation of the receptor.</title>
        <authorList>
            <person name="Bonaventure J."/>
            <person name="Horne W.C."/>
            <person name="Baron R."/>
        </authorList>
    </citation>
    <scope>FUNCTION</scope>
    <scope>CATALYTIC ACTIVITY</scope>
    <scope>PHOSPHORYLATION</scope>
</reference>
<reference key="35">
    <citation type="journal article" date="2007" name="J. Biol. Chem.">
        <title>Binding of Cbl to a phospholipase Cgamma1-docking site on platelet-derived growth factor receptor beta provides a dual mechanism of negative regulation.</title>
        <authorList>
            <person name="Reddi A.L."/>
            <person name="Ying G."/>
            <person name="Duan L."/>
            <person name="Chen G."/>
            <person name="Dimri M."/>
            <person name="Douillard P."/>
            <person name="Druker B.J."/>
            <person name="Naramura M."/>
            <person name="Band V."/>
            <person name="Band H."/>
        </authorList>
    </citation>
    <scope>INTERACTION WITH PDGFRB</scope>
</reference>
<reference key="36">
    <citation type="journal article" date="2008" name="Blood">
        <title>Lyn regulates BCR-ABL and Gab2 tyrosine phosphorylation and c-Cbl protein stability in imatinib-resistant chronic myelogenous leukemia cells.</title>
        <authorList>
            <person name="Wu J."/>
            <person name="Meng F."/>
            <person name="Lu H."/>
            <person name="Kong L."/>
            <person name="Bornmann W."/>
            <person name="Peng Z."/>
            <person name="Talpaz M."/>
            <person name="Donato N.J."/>
        </authorList>
    </citation>
    <scope>INTERACTION WITH LYN</scope>
</reference>
<reference key="37">
    <citation type="journal article" date="2008" name="Bone">
        <title>FGFR2-Cbl interaction in lipid rafts triggers attenuation of PI3K/Akt signaling and osteoblast survival.</title>
        <authorList>
            <person name="Dufour C."/>
            <person name="Guenou H."/>
            <person name="Kaabeche K."/>
            <person name="Bouvard D."/>
            <person name="Sanjay A."/>
            <person name="Marie P.J."/>
        </authorList>
    </citation>
    <scope>FUNCTION</scope>
    <scope>INTERACTION WITH FGFR2</scope>
    <scope>SUBCELLULAR LOCATION</scope>
</reference>
<reference key="38">
    <citation type="journal article" date="2008" name="J. Biol. Chem.">
        <title>Tesk1 interacts with Spry2 to abrogate its inhibition of ERK phosphorylation downstream of receptor tyrosine kinase signaling.</title>
        <authorList>
            <person name="Chandramouli S."/>
            <person name="Yu C.Y."/>
            <person name="Yusoff P."/>
            <person name="Lao D.H."/>
            <person name="Leong H.F."/>
            <person name="Mizuno K."/>
            <person name="Guy G.R."/>
        </authorList>
    </citation>
    <scope>FUNCTION</scope>
    <scope>INTERACTION WITH SPRY2</scope>
</reference>
<reference key="39">
    <citation type="journal article" date="2008" name="Proc. Natl. Acad. Sci. U.S.A.">
        <title>A quantitative atlas of mitotic phosphorylation.</title>
        <authorList>
            <person name="Dephoure N."/>
            <person name="Zhou C."/>
            <person name="Villen J."/>
            <person name="Beausoleil S.A."/>
            <person name="Bakalarski C.E."/>
            <person name="Elledge S.J."/>
            <person name="Gygi S.P."/>
        </authorList>
    </citation>
    <scope>IDENTIFICATION BY MASS SPECTROMETRY [LARGE SCALE ANALYSIS]</scope>
    <source>
        <tissue>Cervix carcinoma</tissue>
    </source>
</reference>
<reference key="40">
    <citation type="journal article" date="2008" name="Traffic">
        <title>Ligand binding induces Cbl-dependent EphB1 receptor degradation through the lysosomal pathway.</title>
        <authorList>
            <person name="Fasen K."/>
            <person name="Cerretti D.P."/>
            <person name="Huynh-Do U."/>
        </authorList>
    </citation>
    <scope>INTERACTION WITH EPHB1</scope>
    <scope>PHOSPHORYLATION</scope>
</reference>
<reference key="41">
    <citation type="journal article" date="2009" name="Biochem. J.">
        <title>Angiopoietin-1-induced ubiquitylation of Tie2 by c-Cbl is required for internalization and degradation.</title>
        <authorList>
            <person name="Wehrle C."/>
            <person name="Van Slyke P."/>
            <person name="Dumont D.J."/>
        </authorList>
    </citation>
    <scope>INTERACTION WITH TEK/TIE2</scope>
    <scope>FUNCTION</scope>
</reference>
<reference key="42">
    <citation type="journal article" date="2009" name="Curr. Biol.">
        <title>An unbiased screen identifies DEP-1 tumor suppressor as a phosphatase controlling EGFR endocytosis.</title>
        <authorList>
            <person name="Tarcic G."/>
            <person name="Boguslavsky S.K."/>
            <person name="Wakim J."/>
            <person name="Kiuchi T."/>
            <person name="Liu A."/>
            <person name="Reinitz F."/>
            <person name="Nathanson D."/>
            <person name="Takahashi T."/>
            <person name="Mischel P.S."/>
            <person name="Ng T."/>
            <person name="Yarden Y."/>
        </authorList>
    </citation>
    <scope>INTERACTION WITH EGFR</scope>
</reference>
<reference key="43">
    <citation type="journal article" date="2009" name="Sci. Signal.">
        <title>Quantitative phosphoproteomic analysis of T cell receptor signaling reveals system-wide modulation of protein-protein interactions.</title>
        <authorList>
            <person name="Mayya V."/>
            <person name="Lundgren D.H."/>
            <person name="Hwang S.-I."/>
            <person name="Rezaul K."/>
            <person name="Wu L."/>
            <person name="Eng J.K."/>
            <person name="Rodionov V."/>
            <person name="Han D.K."/>
        </authorList>
    </citation>
    <scope>PHOSPHORYLATION [LARGE SCALE ANALYSIS] AT SER-452</scope>
    <scope>IDENTIFICATION BY MASS SPECTROMETRY [LARGE SCALE ANALYSIS]</scope>
    <source>
        <tissue>Leukemic T-cell</tissue>
    </source>
</reference>
<reference key="44">
    <citation type="journal article" date="2010" name="Cell. Signal.">
        <title>Mutation of tyrosine residue 857 in the PDGF beta-receptor affects cell proliferation but not migration.</title>
        <authorList>
            <person name="Wardega P."/>
            <person name="Heldin C.H."/>
            <person name="Lennartsson J."/>
        </authorList>
    </citation>
    <scope>INTERACTION WITH PDGFRB</scope>
    <scope>PHOSPHORYLATION</scope>
</reference>
<reference key="45">
    <citation type="journal article" date="2010" name="Nat. Rev. Cancer">
        <title>Fibroblast growth factor signalling: from development to cancer.</title>
        <authorList>
            <person name="Turner N."/>
            <person name="Grose R."/>
        </authorList>
    </citation>
    <scope>REVIEW ON FUNCTION IN FGF SIGNALING</scope>
    <scope>UBIQUITINATION OF FGFR1</scope>
</reference>
<reference key="46">
    <citation type="journal article" date="2010" name="Sci. Signal.">
        <title>Quantitative phosphoproteomics reveals widespread full phosphorylation site occupancy during mitosis.</title>
        <authorList>
            <person name="Olsen J.V."/>
            <person name="Vermeulen M."/>
            <person name="Santamaria A."/>
            <person name="Kumar C."/>
            <person name="Miller M.L."/>
            <person name="Jensen L.J."/>
            <person name="Gnad F."/>
            <person name="Cox J."/>
            <person name="Jensen T.S."/>
            <person name="Nigg E.A."/>
            <person name="Brunak S."/>
            <person name="Mann M."/>
        </authorList>
    </citation>
    <scope>IDENTIFICATION BY MASS SPECTROMETRY [LARGE SCALE ANALYSIS]</scope>
    <source>
        <tissue>Cervix carcinoma</tissue>
    </source>
</reference>
<reference key="47">
    <citation type="journal article" date="2011" name="BMC Syst. Biol.">
        <title>Initial characterization of the human central proteome.</title>
        <authorList>
            <person name="Burkard T.R."/>
            <person name="Planyavsky M."/>
            <person name="Kaupe I."/>
            <person name="Breitwieser F.P."/>
            <person name="Buerckstuemmer T."/>
            <person name="Bennett K.L."/>
            <person name="Superti-Furga G."/>
            <person name="Colinge J."/>
        </authorList>
    </citation>
    <scope>IDENTIFICATION BY MASS SPECTROMETRY [LARGE SCALE ANALYSIS]</scope>
</reference>
<reference key="48">
    <citation type="journal article" date="2011" name="J. Biol. Chem.">
        <title>The Casitas B lineage lymphoma (Cbl) mutant G306E enhances osteogenic differentiation in human mesenchymal stromal cells in part by decreased Cbl-mediated platelet-derived growth factor receptor alpha and fibroblast growth factor receptor 2 ubiquitination.</title>
        <authorList>
            <person name="Severe N."/>
            <person name="Miraoui H."/>
            <person name="Marie P.J."/>
        </authorList>
    </citation>
    <scope>FUNCTION</scope>
    <scope>INTERACTION WITH FGFR2</scope>
</reference>
<reference key="49">
    <citation type="journal article" date="2013" name="Cancer Res.">
        <title>CTEN prolongs signaling by EGFR through reducing its ligand-induced degradation.</title>
        <authorList>
            <person name="Hong S.Y."/>
            <person name="Shih Y.P."/>
            <person name="Li T."/>
            <person name="Carraway K.L. III"/>
            <person name="Lo S.H."/>
        </authorList>
    </citation>
    <scope>INTERACTION WITH TNS4 AND EGFR</scope>
    <scope>MUTAGENESIS OF TYR-674; TYR-700; TYR-731 AND TYR-774</scope>
</reference>
<reference key="50">
    <citation type="journal article" date="2013" name="J. Proteome Res.">
        <title>Toward a comprehensive characterization of a human cancer cell phosphoproteome.</title>
        <authorList>
            <person name="Zhou H."/>
            <person name="Di Palma S."/>
            <person name="Preisinger C."/>
            <person name="Peng M."/>
            <person name="Polat A.N."/>
            <person name="Heck A.J."/>
            <person name="Mohammed S."/>
        </authorList>
    </citation>
    <scope>PHOSPHORYLATION [LARGE SCALE ANALYSIS] AT SER-439; SER-483 AND SER-669</scope>
    <scope>IDENTIFICATION BY MASS SPECTROMETRY [LARGE SCALE ANALYSIS]</scope>
    <source>
        <tissue>Erythroleukemia</tissue>
    </source>
</reference>
<reference key="51">
    <citation type="journal article" date="2013" name="Biochem. Biophys. Res. Commun.">
        <title>The carboxy-terminal region of CD5 is required for c-CBL mediated TCR signaling downmodulation in thymocytes.</title>
        <authorList>
            <person name="Roa N.S."/>
            <person name="Ordonez-Rueda D."/>
            <person name="Chavez-Rios J.R."/>
            <person name="Raman C."/>
            <person name="Garcia-Zepeda E.A."/>
            <person name="Lozano F."/>
            <person name="Soldevila G."/>
        </authorList>
    </citation>
    <scope>INTERACTION WITH CD5</scope>
</reference>
<reference key="52">
    <citation type="journal article" date="2016" name="Oncotarget">
        <title>CD93 and dystroglycan cooperation in human endothelial cell adhesion and migration adhesion and migration.</title>
        <authorList>
            <person name="Galvagni F."/>
            <person name="Nardi F."/>
            <person name="Maida M."/>
            <person name="Bernardini G."/>
            <person name="Vannuccini S."/>
            <person name="Petraglia F."/>
            <person name="Santucci A."/>
            <person name="Orlandini M."/>
        </authorList>
    </citation>
    <scope>SUBCELLULAR LOCATION</scope>
    <scope>INTERACTION WITH CD93</scope>
    <scope>PHOSPHORYLATION AT TYR-774</scope>
</reference>
<reference key="53">
    <citation type="journal article" date="2017" name="J. Virol.">
        <title>Cbl E3 Ligase Mediates the Removal of Nectin-1 from the Surface of Herpes Simplex Virus 1-Infected Cells.</title>
        <authorList>
            <person name="Deschamps T."/>
            <person name="Dogrammatzis C."/>
            <person name="Mullick R."/>
            <person name="Kalamvoki M."/>
        </authorList>
    </citation>
    <scope>FUNCTION</scope>
    <scope>PATHWAY</scope>
</reference>
<reference key="54">
    <citation type="journal article" date="2018" name="J. Cell Biol.">
        <title>IFT20 modulates ciliary PDGFRalpha signaling by regulating the stability of Cbl E3 ubiquitin ligases.</title>
        <authorList>
            <person name="Schmid F.M."/>
            <person name="Schou K.B."/>
            <person name="Vilhelm M.J."/>
            <person name="Holm M.S."/>
            <person name="Breslin L."/>
            <person name="Farinelli P."/>
            <person name="Larsen L.A."/>
            <person name="Andersen J.S."/>
            <person name="Pedersen L.B."/>
            <person name="Christensen S.T."/>
        </authorList>
    </citation>
    <scope>SUBUNIT</scope>
    <scope>INTERACTION WITH IFT20 AND CBLB</scope>
    <scope>UBIQUITINATION</scope>
    <scope>SUBCELLULAR LOCATION</scope>
</reference>
<reference key="55">
    <citation type="journal article" date="2018" name="Mol. Cell">
        <title>An Mtb-human protein-protein interaction map identifies a switch between host antiviral and antibacterial responses.</title>
        <authorList>
            <person name="Penn B.H."/>
            <person name="Netter Z."/>
            <person name="Johnson J.R."/>
            <person name="Von Dollen J."/>
            <person name="Jang G.M."/>
            <person name="Johnson T."/>
            <person name="Ohol Y.M."/>
            <person name="Maher C."/>
            <person name="Bell S.L."/>
            <person name="Geiger K."/>
            <person name="Golovkine G."/>
            <person name="Du X."/>
            <person name="Choi A."/>
            <person name="Parry T."/>
            <person name="Mohapatra B.C."/>
            <person name="Storck M.D."/>
            <person name="Band H."/>
            <person name="Chen C."/>
            <person name="Jaeger S."/>
            <person name="Shales M."/>
            <person name="Portnoy D.A."/>
            <person name="Hernandez R."/>
            <person name="Coscoy L."/>
            <person name="Cox J.S."/>
            <person name="Krogan N.J."/>
        </authorList>
    </citation>
    <scope>INTERACTION WITH MYCOBACTERIUM TUBERCULOSIS LPQN (MICROBIAL INFECTION)</scope>
</reference>
<reference evidence="54 55" key="56">
    <citation type="journal article" date="1999" name="Nature">
        <title>Structure of the amino-terminal domain of Cbl complexed to its binding site on ZAP-70 kinase.</title>
        <authorList>
            <person name="Meng W."/>
            <person name="Sawasdikosol S."/>
            <person name="Burakoff S.J."/>
            <person name="Eck M.J."/>
        </authorList>
    </citation>
    <scope>X-RAY CRYSTALLOGRAPHY (2.1 ANGSTROMS) OF 47-350 IN COMPLEX WITH ZAP70 PEPTIDE AND CALCIUM IONS</scope>
    <scope>CALCIUM-BINDING SITE</scope>
    <scope>MUTAGENESIS OF SER-80; PRO-82; ASP-229; GLU-240; ARG-294 AND GLY-306</scope>
</reference>
<reference key="57">
    <citation type="journal article" date="2000" name="Cell">
        <title>Structure of a c-Cbl-UbcH7 complex: RING domain function in ubiquitin-protein ligases.</title>
        <authorList>
            <person name="Zheng N."/>
            <person name="Wang P."/>
            <person name="Jeffrey P.D."/>
            <person name="Pavletich N.P."/>
        </authorList>
    </citation>
    <scope>X-RAY CRYSTALLOGRAPHY (2.9 ANGSTROMS) OF 47-434 IN COMPLEX WITH ZAP70 AND UBE2L3</scope>
</reference>
<reference key="58">
    <citation type="journal article" date="2010" name="Am. J. Hum. Genet.">
        <title>Heterozygous germline mutations in the CBL tumor-suppressor gene cause a Noonan syndrome-like phenotype.</title>
        <authorList>
            <person name="Martinelli S."/>
            <person name="De Luca A."/>
            <person name="Stellacci E."/>
            <person name="Rossi C."/>
            <person name="Checquolo S."/>
            <person name="Lepri F."/>
            <person name="Caputo V."/>
            <person name="Silvano M."/>
            <person name="Buscherini F."/>
            <person name="Consoli F."/>
            <person name="Ferrara G."/>
            <person name="Digilio M.C."/>
            <person name="Cavaliere M.L."/>
            <person name="van Hagen J.M."/>
            <person name="Zampino G."/>
            <person name="van der Burgt I."/>
            <person name="Ferrero G.B."/>
            <person name="Mazzanti L."/>
            <person name="Screpanti I."/>
            <person name="Yntema H.G."/>
            <person name="Nillesen W.M."/>
            <person name="Savarirayan R."/>
            <person name="Zenker M."/>
            <person name="Dallapiccola B."/>
            <person name="Gelb B.D."/>
            <person name="Tartaglia M."/>
        </authorList>
    </citation>
    <scope>VARIANTS NSLL PRO-367; GLU-382; TYR-390 AND GLN-420</scope>
    <scope>CHARACTERIZATION OF VARIANTS NSLL TYR-390 AND GLN-420</scope>
</reference>
<reference key="59">
    <citation type="journal article" date="2010" name="J. Biol. Chem.">
        <title>Novel oncogenic mutations of CBL in human acute myeloid leukemia that activate growth and survival pathways depend on increased metabolism.</title>
        <authorList>
            <person name="Fernandes M.S."/>
            <person name="Reddy M.M."/>
            <person name="Croteau N.J."/>
            <person name="Walz C."/>
            <person name="Weisbach H."/>
            <person name="Podar K."/>
            <person name="Band H."/>
            <person name="Carroll M."/>
            <person name="Reiter A."/>
            <person name="Larson R.A."/>
            <person name="Salgia R."/>
            <person name="Griffin J.D."/>
            <person name="Sattler M."/>
        </authorList>
    </citation>
    <scope>VARIANTS ARG-287; SER-LYS-365 INS; HIS-371 AND LEU-499</scope>
    <scope>CHARACTERIZATION OF VARIANTS SER-LYS-365 INS AND HIS-371</scope>
    <scope>PHOSPHORYLATION AT TYR-674; TYR-700 AND TYR-774</scope>
</reference>
<reference key="60">
    <citation type="journal article" date="2014" name="Hum. Mutat.">
        <title>RASopathy-associated CBL germline mutations cause aberrant ubiquitylation and trafficking of EGFR.</title>
        <authorList>
            <person name="Brand K."/>
            <person name="Kentsch H."/>
            <person name="Glashoff C."/>
            <person name="Rosenberger G."/>
        </authorList>
    </citation>
    <scope>CHARACTERIZATION OF VARIANTS NSLL GLU-382; TYR-390 AND GLN-420</scope>
</reference>
<feature type="chain" id="PRO_0000055858" description="E3 ubiquitin-protein ligase CBL">
    <location>
        <begin position="1"/>
        <end position="906"/>
    </location>
</feature>
<feature type="domain" description="Cbl-PTB" evidence="5">
    <location>
        <begin position="47"/>
        <end position="351"/>
    </location>
</feature>
<feature type="domain" description="UBA" evidence="4">
    <location>
        <begin position="856"/>
        <end position="895"/>
    </location>
</feature>
<feature type="zinc finger region" description="RING-type" evidence="3">
    <location>
        <begin position="381"/>
        <end position="420"/>
    </location>
</feature>
<feature type="region of interest" description="Sufficient for interaction with EPHB1" evidence="31">
    <location>
        <begin position="1"/>
        <end position="357"/>
    </location>
</feature>
<feature type="region of interest" description="Disordered" evidence="6">
    <location>
        <begin position="1"/>
        <end position="21"/>
    </location>
</feature>
<feature type="region of interest" description="4H">
    <location>
        <begin position="47"/>
        <end position="175"/>
    </location>
</feature>
<feature type="region of interest" description="EF-hand-like">
    <location>
        <begin position="176"/>
        <end position="248"/>
    </location>
</feature>
<feature type="region of interest" description="SH2-like">
    <location>
        <begin position="249"/>
        <end position="351"/>
    </location>
</feature>
<feature type="region of interest" description="Linker">
    <location>
        <begin position="352"/>
        <end position="380"/>
    </location>
</feature>
<feature type="region of interest" description="Required for ubiquitination of SPRED2" evidence="27">
    <location>
        <begin position="358"/>
        <end position="906"/>
    </location>
</feature>
<feature type="region of interest" description="Disordered" evidence="6">
    <location>
        <begin position="432"/>
        <end position="462"/>
    </location>
</feature>
<feature type="region of interest" description="Disordered" evidence="6">
    <location>
        <begin position="477"/>
        <end position="498"/>
    </location>
</feature>
<feature type="region of interest" description="Disordered" evidence="6">
    <location>
        <begin position="519"/>
        <end position="667"/>
    </location>
</feature>
<feature type="region of interest" description="Interaction with CD2AP" evidence="13">
    <location>
        <begin position="648"/>
        <end position="906"/>
    </location>
</feature>
<feature type="region of interest" description="Disordered" evidence="6">
    <location>
        <begin position="680"/>
        <end position="719"/>
    </location>
</feature>
<feature type="region of interest" description="Disordered" evidence="6">
    <location>
        <begin position="743"/>
        <end position="781"/>
    </location>
</feature>
<feature type="region of interest" description="Disordered" evidence="6">
    <location>
        <begin position="799"/>
        <end position="854"/>
    </location>
</feature>
<feature type="compositionally biased region" description="Gly residues" evidence="6">
    <location>
        <begin position="10"/>
        <end position="21"/>
    </location>
</feature>
<feature type="compositionally biased region" description="Pro residues" evidence="6">
    <location>
        <begin position="533"/>
        <end position="550"/>
    </location>
</feature>
<feature type="compositionally biased region" description="Polar residues" evidence="6">
    <location>
        <begin position="639"/>
        <end position="653"/>
    </location>
</feature>
<feature type="compositionally biased region" description="Acidic residues" evidence="6">
    <location>
        <begin position="765"/>
        <end position="774"/>
    </location>
</feature>
<feature type="compositionally biased region" description="Low complexity" evidence="6">
    <location>
        <begin position="838"/>
        <end position="854"/>
    </location>
</feature>
<feature type="binding site" evidence="54 55">
    <location>
        <position position="229"/>
    </location>
    <ligand>
        <name>Ca(2+)</name>
        <dbReference type="ChEBI" id="CHEBI:29108"/>
    </ligand>
</feature>
<feature type="binding site" evidence="54 55">
    <location>
        <position position="231"/>
    </location>
    <ligand>
        <name>Ca(2+)</name>
        <dbReference type="ChEBI" id="CHEBI:29108"/>
    </ligand>
</feature>
<feature type="binding site" evidence="54 55">
    <location>
        <position position="233"/>
    </location>
    <ligand>
        <name>Ca(2+)</name>
        <dbReference type="ChEBI" id="CHEBI:29108"/>
    </ligand>
</feature>
<feature type="binding site" evidence="54 55">
    <location>
        <position position="235"/>
    </location>
    <ligand>
        <name>Ca(2+)</name>
        <dbReference type="ChEBI" id="CHEBI:29108"/>
    </ligand>
</feature>
<feature type="binding site" evidence="54 55">
    <location>
        <position position="240"/>
    </location>
    <ligand>
        <name>Ca(2+)</name>
        <dbReference type="ChEBI" id="CHEBI:29108"/>
    </ligand>
</feature>
<feature type="binding site" evidence="1">
    <location>
        <position position="294"/>
    </location>
    <ligand>
        <name>4-O-phospho-L-tyrosine</name>
        <dbReference type="ChEBI" id="CHEBI:62338"/>
    </ligand>
</feature>
<feature type="modified residue" description="Phosphotyrosine; by INSR" evidence="17">
    <location>
        <position position="371"/>
    </location>
</feature>
<feature type="modified residue" description="Phosphoserine" evidence="58">
    <location>
        <position position="439"/>
    </location>
</feature>
<feature type="modified residue" description="Phosphoserine" evidence="57">
    <location>
        <position position="452"/>
    </location>
</feature>
<feature type="modified residue" description="Phosphoserine" evidence="58">
    <location>
        <position position="483"/>
    </location>
</feature>
<feature type="modified residue" description="Phosphoserine" evidence="2">
    <location>
        <position position="619"/>
    </location>
</feature>
<feature type="modified residue" description="Phosphoserine" evidence="2">
    <location>
        <position position="642"/>
    </location>
</feature>
<feature type="modified residue" description="Phosphoserine" evidence="2">
    <location>
        <position position="668"/>
    </location>
</feature>
<feature type="modified residue" description="Phosphoserine" evidence="58">
    <location>
        <position position="669"/>
    </location>
</feature>
<feature type="modified residue" description="Phosphotyrosine" evidence="39">
    <location>
        <position position="674"/>
    </location>
</feature>
<feature type="modified residue" description="Phosphotyrosine; by ABL1" evidence="17 25 39">
    <location>
        <position position="700"/>
    </location>
</feature>
<feature type="modified residue" description="Phosphotyrosine; by SRC" evidence="22">
    <location>
        <position position="731"/>
    </location>
</feature>
<feature type="modified residue" description="Phosphotyrosine" evidence="17 39 44">
    <location>
        <position position="774"/>
    </location>
</feature>
<feature type="modified residue" description="Phosphoserine" evidence="56">
    <location>
        <position position="900"/>
    </location>
</feature>
<feature type="sequence variant" id="VAR_071040" description="Found in patients with acute myeloid leukemia; uncertain significance." evidence="39">
    <original>K</original>
    <variation>R</variation>
    <location>
        <position position="287"/>
    </location>
</feature>
<feature type="sequence variant" id="VAR_071041" description="Found in patients with acute myeloid leukemia; uncertain significance; loss of the ability to negatively regulate signaling pathways; promotes cell cycle progression; decreases apoptosis.">
    <original>Q</original>
    <variation>QSK</variation>
    <location>
        <position position="365"/>
    </location>
</feature>
<feature type="sequence variant" id="VAR_064332" description="In NSLL; dbSNP:rs267606704." evidence="38">
    <original>Q</original>
    <variation>P</variation>
    <location>
        <position position="367"/>
    </location>
</feature>
<feature type="sequence variant" id="VAR_071042" description="Found in patients with acute myeloid leukemia; uncertain significance; loss of the ability to negatively regulate signaling pathways; promotes cell cycle progression; decreases apoptosis; dbSNP:rs267606706." evidence="39">
    <original>Y</original>
    <variation>H</variation>
    <location>
        <position position="371"/>
    </location>
</feature>
<feature type="sequence variant" id="VAR_064333" description="In NSLL; dominant-negative; impairs CBL-mediated ubiquitination, internalization and degradation of the EGF receptor/EGFR; decreases the ability to negatively regulate EGFR signaling; dbSNP:rs267606705." evidence="43">
    <original>K</original>
    <variation>E</variation>
    <location>
        <position position="382"/>
    </location>
</feature>
<feature type="sequence variant" id="VAR_064334" description="In NSLL; dominant-negative; impairs CBL-mediated ubiquitination, internalization and degradation of the EGF receptor/EGFR; decreases the ability to negatively regulate EGFR signaling; dbSNP:rs267606707." evidence="38 43">
    <original>D</original>
    <variation>Y</variation>
    <location>
        <position position="390"/>
    </location>
</feature>
<feature type="sequence variant" id="VAR_064335" description="In NSLL; dominant-negative; impairs CBL-mediated ubiquitination, internalization and degradation of the EGF receptor/EGFR; decreases the ability to negatively regulate EGFR signaling; dbSNP:rs267606708." evidence="38 43">
    <original>R</original>
    <variation>Q</variation>
    <location>
        <position position="420"/>
    </location>
</feature>
<feature type="sequence variant" id="VAR_071043" description="Found in patients with acute myeloid leukemia; uncertain significance." evidence="39">
    <original>R</original>
    <variation>L</variation>
    <location>
        <position position="499"/>
    </location>
</feature>
<feature type="sequence variant" id="VAR_057211" description="In dbSNP:rs2227988.">
    <original>L</original>
    <variation>F</variation>
    <location>
        <position position="620"/>
    </location>
</feature>
<feature type="sequence variant" id="VAR_057212" description="In dbSNP:rs2229073.">
    <original>P</original>
    <variation>L</variation>
    <location>
        <position position="782"/>
    </location>
</feature>
<feature type="sequence variant" id="VAR_057213" description="In dbSNP:rs17122769.">
    <original>V</original>
    <variation>I</variation>
    <location>
        <position position="904"/>
    </location>
</feature>
<feature type="mutagenesis site" description="Abolishes interaction with ZAP70." evidence="7">
    <original>S</original>
    <variation>D</variation>
    <location>
        <position position="80"/>
    </location>
</feature>
<feature type="mutagenesis site" description="Abolishes interaction with ZAP70." evidence="7">
    <original>P</original>
    <variation>A</variation>
    <location>
        <position position="82"/>
    </location>
</feature>
<feature type="mutagenesis site" description="Abolishes interaction with ZAP70." evidence="7">
    <original>D</original>
    <variation>Q</variation>
    <location>
        <position position="229"/>
    </location>
</feature>
<feature type="mutagenesis site" description="Abolishes interaction with ZAP70." evidence="7">
    <original>E</original>
    <variation>S</variation>
    <location>
        <position position="240"/>
    </location>
</feature>
<feature type="mutagenesis site" description="Abolishes interaction with ZAP70." evidence="7">
    <original>R</original>
    <variation>K</variation>
    <location>
        <position position="294"/>
    </location>
</feature>
<feature type="mutagenesis site" description="Abolishes interaction with ZAP70 and EPHB1, but does not affect interaction with SLA. Reduces ubiquitination and therefore proteasomal degradation of SPRED2." evidence="7 10 27">
    <original>G</original>
    <variation>E</variation>
    <location>
        <position position="306"/>
    </location>
</feature>
<feature type="mutagenesis site" description="Strongly reduces tyrosine phosphorylation by INSR; when associated with F-700 and F-774." evidence="17">
    <original>Y</original>
    <variation>F</variation>
    <location>
        <position position="371"/>
    </location>
</feature>
<feature type="mutagenesis site" description="Loss of ubiquitin ligase activity." evidence="16">
    <original>C</original>
    <variation>A</variation>
    <location>
        <position position="381"/>
    </location>
</feature>
<feature type="mutagenesis site" description="Does not affect interaction with TNS4 following EGF stimulation." evidence="42">
    <original>Y</original>
    <variation>F</variation>
    <location>
        <position position="674"/>
    </location>
</feature>
<feature type="mutagenesis site" description="Does not affect interaction with TNS4 following EGF stimulation. Strongly reduces tyrosine phosphorylation by INSR; when associated with F-371 and F-774." evidence="17 42">
    <original>Y</original>
    <variation>F</variation>
    <location>
        <position position="700"/>
    </location>
</feature>
<feature type="mutagenesis site" description="No effect on tyrosine phosphorylation by INSR. Loss of phosphorylation by SRC. Inhibition of bone resorption. Abolishes interaction with PIK3R1. Does not affect interaction with TNS4 following EGF stimulation." evidence="17 22 42">
    <original>Y</original>
    <variation>F</variation>
    <location>
        <position position="731"/>
    </location>
</feature>
<feature type="mutagenesis site" description="Loss of interaction with TNS4 following EGF stimulation. Strongly reduces tyrosine phosphorylation by INSR; when associated with F-371 and F-700." evidence="17 42">
    <original>Y</original>
    <variation>F</variation>
    <location>
        <position position="774"/>
    </location>
</feature>
<feature type="sequence conflict" description="In Ref. 1; CAA40393." evidence="53" ref="1">
    <original>S</original>
    <variation>T</variation>
    <location>
        <position position="15"/>
    </location>
</feature>
<feature type="helix" evidence="65">
    <location>
        <begin position="53"/>
        <end position="70"/>
    </location>
</feature>
<feature type="helix" evidence="65">
    <location>
        <begin position="73"/>
        <end position="75"/>
    </location>
</feature>
<feature type="strand" evidence="69">
    <location>
        <begin position="79"/>
        <end position="82"/>
    </location>
</feature>
<feature type="helix" evidence="65">
    <location>
        <begin position="84"/>
        <end position="101"/>
    </location>
</feature>
<feature type="turn" evidence="69">
    <location>
        <begin position="102"/>
        <end position="104"/>
    </location>
</feature>
<feature type="helix" evidence="65">
    <location>
        <begin position="106"/>
        <end position="111"/>
    </location>
</feature>
<feature type="helix" evidence="65">
    <location>
        <begin position="113"/>
        <end position="136"/>
    </location>
</feature>
<feature type="helix" evidence="65">
    <location>
        <begin position="137"/>
        <end position="141"/>
    </location>
</feature>
<feature type="strand" evidence="68">
    <location>
        <begin position="142"/>
        <end position="144"/>
    </location>
</feature>
<feature type="helix" evidence="65">
    <location>
        <begin position="146"/>
        <end position="168"/>
    </location>
</feature>
<feature type="helix" evidence="65">
    <location>
        <begin position="170"/>
        <end position="172"/>
    </location>
</feature>
<feature type="helix" evidence="65">
    <location>
        <begin position="176"/>
        <end position="178"/>
    </location>
</feature>
<feature type="helix" evidence="65">
    <location>
        <begin position="184"/>
        <end position="194"/>
    </location>
</feature>
<feature type="strand" evidence="65">
    <location>
        <begin position="198"/>
        <end position="201"/>
    </location>
</feature>
<feature type="helix" evidence="65">
    <location>
        <begin position="202"/>
        <end position="212"/>
    </location>
</feature>
<feature type="helix" evidence="65">
    <location>
        <begin position="218"/>
        <end position="228"/>
    </location>
</feature>
<feature type="strand" evidence="65">
    <location>
        <begin position="233"/>
        <end position="237"/>
    </location>
</feature>
<feature type="helix" evidence="65">
    <location>
        <begin position="238"/>
        <end position="247"/>
    </location>
</feature>
<feature type="helix" evidence="65">
    <location>
        <begin position="251"/>
        <end position="253"/>
    </location>
</feature>
<feature type="helix" evidence="65">
    <location>
        <begin position="254"/>
        <end position="261"/>
    </location>
</feature>
<feature type="turn" evidence="62">
    <location>
        <begin position="262"/>
        <end position="264"/>
    </location>
</feature>
<feature type="strand" evidence="67">
    <location>
        <begin position="268"/>
        <end position="271"/>
    </location>
</feature>
<feature type="helix" evidence="65">
    <location>
        <begin position="274"/>
        <end position="281"/>
    </location>
</feature>
<feature type="helix" evidence="65">
    <location>
        <begin position="282"/>
        <end position="284"/>
    </location>
</feature>
<feature type="strand" evidence="65">
    <location>
        <begin position="290"/>
        <end position="295"/>
    </location>
</feature>
<feature type="strand" evidence="65">
    <location>
        <begin position="297"/>
        <end position="299"/>
    </location>
</feature>
<feature type="strand" evidence="65">
    <location>
        <begin position="302"/>
        <end position="308"/>
    </location>
</feature>
<feature type="turn" evidence="63">
    <location>
        <begin position="310"/>
        <end position="312"/>
    </location>
</feature>
<feature type="strand" evidence="65">
    <location>
        <begin position="314"/>
        <end position="317"/>
    </location>
</feature>
<feature type="strand" evidence="64">
    <location>
        <begin position="320"/>
        <end position="322"/>
    </location>
</feature>
<feature type="helix" evidence="65">
    <location>
        <begin position="324"/>
        <end position="333"/>
    </location>
</feature>
<feature type="helix" evidence="67">
    <location>
        <begin position="350"/>
        <end position="352"/>
    </location>
</feature>
<feature type="strand" evidence="59">
    <location>
        <begin position="354"/>
        <end position="356"/>
    </location>
</feature>
<feature type="strand" evidence="66">
    <location>
        <begin position="360"/>
        <end position="362"/>
    </location>
</feature>
<feature type="helix" evidence="67">
    <location>
        <begin position="365"/>
        <end position="378"/>
    </location>
</feature>
<feature type="turn" evidence="67">
    <location>
        <begin position="382"/>
        <end position="384"/>
    </location>
</feature>
<feature type="strand" evidence="67">
    <location>
        <begin position="385"/>
        <end position="388"/>
    </location>
</feature>
<feature type="strand" evidence="67">
    <location>
        <begin position="391"/>
        <end position="394"/>
    </location>
</feature>
<feature type="strand" evidence="60">
    <location>
        <begin position="398"/>
        <end position="400"/>
    </location>
</feature>
<feature type="helix" evidence="67">
    <location>
        <begin position="402"/>
        <end position="410"/>
    </location>
</feature>
<feature type="turn" evidence="67">
    <location>
        <begin position="417"/>
        <end position="419"/>
    </location>
</feature>
<feature type="strand" evidence="67">
    <location>
        <begin position="425"/>
        <end position="428"/>
    </location>
</feature>
<feature type="strand" evidence="66">
    <location>
        <begin position="430"/>
        <end position="432"/>
    </location>
</feature>
<feature type="helix" evidence="61">
    <location>
        <begin position="856"/>
        <end position="866"/>
    </location>
</feature>
<feature type="helix" evidence="61">
    <location>
        <begin position="871"/>
        <end position="880"/>
    </location>
</feature>
<feature type="turn" evidence="61">
    <location>
        <begin position="881"/>
        <end position="883"/>
    </location>
</feature>
<feature type="helix" evidence="61">
    <location>
        <begin position="885"/>
        <end position="895"/>
    </location>
</feature>
<keyword id="KW-0002">3D-structure</keyword>
<keyword id="KW-0106">Calcium</keyword>
<keyword id="KW-1003">Cell membrane</keyword>
<keyword id="KW-0966">Cell projection</keyword>
<keyword id="KW-0963">Cytoplasm</keyword>
<keyword id="KW-0225">Disease variant</keyword>
<keyword id="KW-0333">Golgi apparatus</keyword>
<keyword id="KW-0472">Membrane</keyword>
<keyword id="KW-0479">Metal-binding</keyword>
<keyword id="KW-0597">Phosphoprotein</keyword>
<keyword id="KW-1267">Proteomics identification</keyword>
<keyword id="KW-0656">Proto-oncogene</keyword>
<keyword id="KW-1185">Reference proteome</keyword>
<keyword id="KW-0677">Repeat</keyword>
<keyword id="KW-0808">Transferase</keyword>
<keyword id="KW-0832">Ubl conjugation</keyword>
<keyword id="KW-0833">Ubl conjugation pathway</keyword>
<keyword id="KW-0862">Zinc</keyword>
<keyword id="KW-0863">Zinc-finger</keyword>
<organism>
    <name type="scientific">Homo sapiens</name>
    <name type="common">Human</name>
    <dbReference type="NCBI Taxonomy" id="9606"/>
    <lineage>
        <taxon>Eukaryota</taxon>
        <taxon>Metazoa</taxon>
        <taxon>Chordata</taxon>
        <taxon>Craniata</taxon>
        <taxon>Vertebrata</taxon>
        <taxon>Euteleostomi</taxon>
        <taxon>Mammalia</taxon>
        <taxon>Eutheria</taxon>
        <taxon>Euarchontoglires</taxon>
        <taxon>Primates</taxon>
        <taxon>Haplorrhini</taxon>
        <taxon>Catarrhini</taxon>
        <taxon>Hominidae</taxon>
        <taxon>Homo</taxon>
    </lineage>
</organism>
<dbReference type="EC" id="2.3.2.27" evidence="11 21 28"/>
<dbReference type="EMBL" id="X57110">
    <property type="protein sequence ID" value="CAA40393.1"/>
    <property type="molecule type" value="mRNA"/>
</dbReference>
<dbReference type="EMBL" id="AP002956">
    <property type="status" value="NOT_ANNOTATED_CDS"/>
    <property type="molecule type" value="Genomic_DNA"/>
</dbReference>
<dbReference type="EMBL" id="BC132733">
    <property type="protein sequence ID" value="AAI32734.1"/>
    <property type="molecule type" value="mRNA"/>
</dbReference>
<dbReference type="EMBL" id="BC136463">
    <property type="protein sequence ID" value="AAI36464.1"/>
    <property type="molecule type" value="mRNA"/>
</dbReference>
<dbReference type="CCDS" id="CCDS8418.1"/>
<dbReference type="PIR" id="A43817">
    <property type="entry name" value="A43817"/>
</dbReference>
<dbReference type="RefSeq" id="NP_005179.2">
    <property type="nucleotide sequence ID" value="NM_005188.3"/>
</dbReference>
<dbReference type="PDB" id="1B47">
    <property type="method" value="X-ray"/>
    <property type="resolution" value="2.20 A"/>
    <property type="chains" value="A/B/C=47-350"/>
</dbReference>
<dbReference type="PDB" id="1FBV">
    <property type="method" value="X-ray"/>
    <property type="resolution" value="2.90 A"/>
    <property type="chains" value="A=47-434"/>
</dbReference>
<dbReference type="PDB" id="1YVH">
    <property type="method" value="X-ray"/>
    <property type="resolution" value="2.05 A"/>
    <property type="chains" value="A=25-351"/>
</dbReference>
<dbReference type="PDB" id="2CBL">
    <property type="method" value="X-ray"/>
    <property type="resolution" value="2.10 A"/>
    <property type="chains" value="A=47-351"/>
</dbReference>
<dbReference type="PDB" id="2JUJ">
    <property type="method" value="NMR"/>
    <property type="chains" value="A=851-906"/>
</dbReference>
<dbReference type="PDB" id="2K4D">
    <property type="method" value="NMR"/>
    <property type="chains" value="A=358-437"/>
</dbReference>
<dbReference type="PDB" id="2OO9">
    <property type="method" value="X-ray"/>
    <property type="resolution" value="2.10 A"/>
    <property type="chains" value="A/B/C=856-895"/>
</dbReference>
<dbReference type="PDB" id="2Y1M">
    <property type="method" value="X-ray"/>
    <property type="resolution" value="2.67 A"/>
    <property type="chains" value="A/B/C/D/E/F=47-435"/>
</dbReference>
<dbReference type="PDB" id="2Y1N">
    <property type="method" value="X-ray"/>
    <property type="resolution" value="2.00 A"/>
    <property type="chains" value="A/C=47-435"/>
</dbReference>
<dbReference type="PDB" id="3BUM">
    <property type="method" value="X-ray"/>
    <property type="resolution" value="2.00 A"/>
    <property type="chains" value="B=25-351"/>
</dbReference>
<dbReference type="PDB" id="3BUN">
    <property type="method" value="X-ray"/>
    <property type="resolution" value="2.00 A"/>
    <property type="chains" value="B=25-351"/>
</dbReference>
<dbReference type="PDB" id="3BUO">
    <property type="method" value="X-ray"/>
    <property type="resolution" value="2.60 A"/>
    <property type="chains" value="B/D=25-351"/>
</dbReference>
<dbReference type="PDB" id="3BUW">
    <property type="method" value="X-ray"/>
    <property type="resolution" value="1.45 A"/>
    <property type="chains" value="B/D=25-351"/>
</dbReference>
<dbReference type="PDB" id="3BUX">
    <property type="method" value="X-ray"/>
    <property type="resolution" value="1.35 A"/>
    <property type="chains" value="B/D=25-351"/>
</dbReference>
<dbReference type="PDB" id="3OB1">
    <property type="method" value="X-ray"/>
    <property type="resolution" value="2.20 A"/>
    <property type="chains" value="B=25-351"/>
</dbReference>
<dbReference type="PDB" id="3OB2">
    <property type="method" value="X-ray"/>
    <property type="resolution" value="2.10 A"/>
    <property type="chains" value="B=25-351"/>
</dbReference>
<dbReference type="PDB" id="3PLF">
    <property type="method" value="X-ray"/>
    <property type="resolution" value="1.92 A"/>
    <property type="chains" value="B/D=25-351"/>
</dbReference>
<dbReference type="PDB" id="4A49">
    <property type="method" value="X-ray"/>
    <property type="resolution" value="2.21 A"/>
    <property type="chains" value="A=354-435"/>
</dbReference>
<dbReference type="PDB" id="4A4B">
    <property type="method" value="X-ray"/>
    <property type="resolution" value="2.79 A"/>
    <property type="chains" value="A=47-435"/>
</dbReference>
<dbReference type="PDB" id="4A4C">
    <property type="method" value="X-ray"/>
    <property type="resolution" value="2.70 A"/>
    <property type="chains" value="A=47-435"/>
</dbReference>
<dbReference type="PDB" id="4GPL">
    <property type="method" value="X-ray"/>
    <property type="resolution" value="3.00 A"/>
    <property type="chains" value="B=47-351"/>
</dbReference>
<dbReference type="PDB" id="5HKW">
    <property type="method" value="X-ray"/>
    <property type="resolution" value="2.25 A"/>
    <property type="chains" value="A/B/C=47-351"/>
</dbReference>
<dbReference type="PDB" id="5HKX">
    <property type="method" value="X-ray"/>
    <property type="resolution" value="1.85 A"/>
    <property type="chains" value="A=47-435"/>
</dbReference>
<dbReference type="PDB" id="5HKY">
    <property type="method" value="X-ray"/>
    <property type="resolution" value="1.80 A"/>
    <property type="chains" value="A=47-351"/>
</dbReference>
<dbReference type="PDB" id="5HKZ">
    <property type="method" value="X-ray"/>
    <property type="resolution" value="1.80 A"/>
    <property type="chains" value="A=47-351"/>
</dbReference>
<dbReference type="PDB" id="5HL0">
    <property type="method" value="X-ray"/>
    <property type="resolution" value="2.20 A"/>
    <property type="chains" value="A=47-351"/>
</dbReference>
<dbReference type="PDB" id="5J3X">
    <property type="method" value="X-ray"/>
    <property type="resolution" value="2.82 A"/>
    <property type="chains" value="A/B/C/D/E/F=47-435"/>
</dbReference>
<dbReference type="PDB" id="5O76">
    <property type="method" value="X-ray"/>
    <property type="resolution" value="2.47 A"/>
    <property type="chains" value="A/C=47-435"/>
</dbReference>
<dbReference type="PDB" id="6O02">
    <property type="method" value="X-ray"/>
    <property type="resolution" value="2.95 A"/>
    <property type="chains" value="A=47-353"/>
</dbReference>
<dbReference type="PDB" id="6O03">
    <property type="method" value="X-ray"/>
    <property type="resolution" value="3.30 A"/>
    <property type="chains" value="A/B=47-353"/>
</dbReference>
<dbReference type="PDB" id="6XAR">
    <property type="method" value="X-ray"/>
    <property type="resolution" value="2.50 A"/>
    <property type="chains" value="A/B=25-357"/>
</dbReference>
<dbReference type="PDB" id="7SIY">
    <property type="method" value="X-ray"/>
    <property type="resolution" value="1.48 A"/>
    <property type="chains" value="A=48-351"/>
</dbReference>
<dbReference type="PDBsum" id="1B47"/>
<dbReference type="PDBsum" id="1FBV"/>
<dbReference type="PDBsum" id="1YVH"/>
<dbReference type="PDBsum" id="2CBL"/>
<dbReference type="PDBsum" id="2JUJ"/>
<dbReference type="PDBsum" id="2K4D"/>
<dbReference type="PDBsum" id="2OO9"/>
<dbReference type="PDBsum" id="2Y1M"/>
<dbReference type="PDBsum" id="2Y1N"/>
<dbReference type="PDBsum" id="3BUM"/>
<dbReference type="PDBsum" id="3BUN"/>
<dbReference type="PDBsum" id="3BUO"/>
<dbReference type="PDBsum" id="3BUW"/>
<dbReference type="PDBsum" id="3BUX"/>
<dbReference type="PDBsum" id="3OB1"/>
<dbReference type="PDBsum" id="3OB2"/>
<dbReference type="PDBsum" id="3PLF"/>
<dbReference type="PDBsum" id="4A49"/>
<dbReference type="PDBsum" id="4A4B"/>
<dbReference type="PDBsum" id="4A4C"/>
<dbReference type="PDBsum" id="4GPL"/>
<dbReference type="PDBsum" id="5HKW"/>
<dbReference type="PDBsum" id="5HKX"/>
<dbReference type="PDBsum" id="5HKY"/>
<dbReference type="PDBsum" id="5HKZ"/>
<dbReference type="PDBsum" id="5HL0"/>
<dbReference type="PDBsum" id="5J3X"/>
<dbReference type="PDBsum" id="5O76"/>
<dbReference type="PDBsum" id="6O02"/>
<dbReference type="PDBsum" id="6O03"/>
<dbReference type="PDBsum" id="6XAR"/>
<dbReference type="PDBsum" id="7SIY"/>
<dbReference type="BMRB" id="P22681"/>
<dbReference type="SMR" id="P22681"/>
<dbReference type="BioGRID" id="107315">
    <property type="interactions" value="512"/>
</dbReference>
<dbReference type="CORUM" id="P22681"/>
<dbReference type="DIP" id="DIP-189N"/>
<dbReference type="FunCoup" id="P22681">
    <property type="interactions" value="2642"/>
</dbReference>
<dbReference type="IntAct" id="P22681">
    <property type="interactions" value="118"/>
</dbReference>
<dbReference type="MINT" id="P22681"/>
<dbReference type="STRING" id="9606.ENSP00000264033"/>
<dbReference type="GlyCosmos" id="P22681">
    <property type="glycosylation" value="7 sites, 2 glycans"/>
</dbReference>
<dbReference type="GlyGen" id="P22681">
    <property type="glycosylation" value="11 sites, 2 O-linked glycans (10 sites)"/>
</dbReference>
<dbReference type="iPTMnet" id="P22681"/>
<dbReference type="MetOSite" id="P22681"/>
<dbReference type="PhosphoSitePlus" id="P22681"/>
<dbReference type="BioMuta" id="CBL"/>
<dbReference type="DMDM" id="251757253"/>
<dbReference type="CPTAC" id="CPTAC-1567"/>
<dbReference type="jPOST" id="P22681"/>
<dbReference type="MassIVE" id="P22681"/>
<dbReference type="PaxDb" id="9606-ENSP00000264033"/>
<dbReference type="PeptideAtlas" id="P22681"/>
<dbReference type="ProteomicsDB" id="54017"/>
<dbReference type="Pumba" id="P22681"/>
<dbReference type="Antibodypedia" id="3815">
    <property type="antibodies" value="1155 antibodies from 48 providers"/>
</dbReference>
<dbReference type="DNASU" id="867"/>
<dbReference type="Ensembl" id="ENST00000264033.6">
    <property type="protein sequence ID" value="ENSP00000264033.3"/>
    <property type="gene ID" value="ENSG00000110395.8"/>
</dbReference>
<dbReference type="GeneID" id="867"/>
<dbReference type="KEGG" id="hsa:867"/>
<dbReference type="MANE-Select" id="ENST00000264033.6">
    <property type="protein sequence ID" value="ENSP00000264033.3"/>
    <property type="RefSeq nucleotide sequence ID" value="NM_005188.4"/>
    <property type="RefSeq protein sequence ID" value="NP_005179.2"/>
</dbReference>
<dbReference type="UCSC" id="uc001pwe.5">
    <property type="organism name" value="human"/>
</dbReference>
<dbReference type="AGR" id="HGNC:1541"/>
<dbReference type="CTD" id="867"/>
<dbReference type="DisGeNET" id="867"/>
<dbReference type="GeneCards" id="CBL"/>
<dbReference type="HGNC" id="HGNC:1541">
    <property type="gene designation" value="CBL"/>
</dbReference>
<dbReference type="HPA" id="ENSG00000110395">
    <property type="expression patterns" value="Low tissue specificity"/>
</dbReference>
<dbReference type="MalaCards" id="CBL"/>
<dbReference type="MIM" id="165360">
    <property type="type" value="gene"/>
</dbReference>
<dbReference type="MIM" id="613563">
    <property type="type" value="phenotype"/>
</dbReference>
<dbReference type="neXtProt" id="NX_P22681"/>
<dbReference type="OpenTargets" id="ENSG00000110395"/>
<dbReference type="Orphanet" id="98850">
    <property type="disease" value="Aggressive systemic mastocytosis"/>
</dbReference>
<dbReference type="Orphanet" id="86834">
    <property type="disease" value="Juvenile myelomonocytic leukemia"/>
</dbReference>
<dbReference type="Orphanet" id="648">
    <property type="disease" value="Noonan syndrome"/>
</dbReference>
<dbReference type="Orphanet" id="363972">
    <property type="disease" value="Noonan syndrome-like disorder with juvenile myelomonocytic leukemia"/>
</dbReference>
<dbReference type="PharmGKB" id="PA26115"/>
<dbReference type="VEuPathDB" id="HostDB:ENSG00000110395"/>
<dbReference type="eggNOG" id="KOG1785">
    <property type="taxonomic scope" value="Eukaryota"/>
</dbReference>
<dbReference type="GeneTree" id="ENSGT00940000155772"/>
<dbReference type="HOGENOM" id="CLU_013535_3_0_1"/>
<dbReference type="InParanoid" id="P22681"/>
<dbReference type="OMA" id="GCMYEAM"/>
<dbReference type="OrthoDB" id="7237699at2759"/>
<dbReference type="PAN-GO" id="P22681">
    <property type="GO annotations" value="7 GO annotations based on evolutionary models"/>
</dbReference>
<dbReference type="PhylomeDB" id="P22681"/>
<dbReference type="TreeFam" id="TF314210"/>
<dbReference type="BRENDA" id="2.3.2.27">
    <property type="organism ID" value="2681"/>
</dbReference>
<dbReference type="PathwayCommons" id="P22681"/>
<dbReference type="Reactome" id="R-HSA-1059683">
    <property type="pathway name" value="Interleukin-6 signaling"/>
</dbReference>
<dbReference type="Reactome" id="R-HSA-1236382">
    <property type="pathway name" value="Constitutive Signaling by Ligand-Responsive EGFR Cancer Variants"/>
</dbReference>
<dbReference type="Reactome" id="R-HSA-1295596">
    <property type="pathway name" value="Spry regulation of FGF signaling"/>
</dbReference>
<dbReference type="Reactome" id="R-HSA-1433559">
    <property type="pathway name" value="Regulation of KIT signaling"/>
</dbReference>
<dbReference type="Reactome" id="R-HSA-182971">
    <property type="pathway name" value="EGFR downregulation"/>
</dbReference>
<dbReference type="Reactome" id="R-HSA-2173789">
    <property type="pathway name" value="TGF-beta receptor signaling activates SMADs"/>
</dbReference>
<dbReference type="Reactome" id="R-HSA-5637810">
    <property type="pathway name" value="Constitutive Signaling by EGFRvIII"/>
</dbReference>
<dbReference type="Reactome" id="R-HSA-5654726">
    <property type="pathway name" value="Negative regulation of FGFR1 signaling"/>
</dbReference>
<dbReference type="Reactome" id="R-HSA-5654727">
    <property type="pathway name" value="Negative regulation of FGFR2 signaling"/>
</dbReference>
<dbReference type="Reactome" id="R-HSA-5654732">
    <property type="pathway name" value="Negative regulation of FGFR3 signaling"/>
</dbReference>
<dbReference type="Reactome" id="R-HSA-5654733">
    <property type="pathway name" value="Negative regulation of FGFR4 signaling"/>
</dbReference>
<dbReference type="Reactome" id="R-HSA-6807004">
    <property type="pathway name" value="Negative regulation of MET activity"/>
</dbReference>
<dbReference type="Reactome" id="R-HSA-8849469">
    <property type="pathway name" value="PTK6 Regulates RTKs and Their Effectors AKT1 and DOK1"/>
</dbReference>
<dbReference type="Reactome" id="R-HSA-8856825">
    <property type="pathway name" value="Cargo recognition for clathrin-mediated endocytosis"/>
</dbReference>
<dbReference type="Reactome" id="R-HSA-8856828">
    <property type="pathway name" value="Clathrin-mediated endocytosis"/>
</dbReference>
<dbReference type="Reactome" id="R-HSA-8875360">
    <property type="pathway name" value="InlB-mediated entry of Listeria monocytogenes into host cell"/>
</dbReference>
<dbReference type="Reactome" id="R-HSA-912631">
    <property type="pathway name" value="Regulation of signaling by CBL"/>
</dbReference>
<dbReference type="Reactome" id="R-HSA-9680350">
    <property type="pathway name" value="Signaling by CSF1 (M-CSF) in myeloid cells"/>
</dbReference>
<dbReference type="Reactome" id="R-HSA-9706369">
    <property type="pathway name" value="Negative regulation of FLT3"/>
</dbReference>
<dbReference type="Reactome" id="R-HSA-9706377">
    <property type="pathway name" value="FLT3 signaling by CBL mutants"/>
</dbReference>
<dbReference type="SignaLink" id="P22681"/>
<dbReference type="SIGNOR" id="P22681"/>
<dbReference type="UniPathway" id="UPA00143"/>
<dbReference type="BioGRID-ORCS" id="867">
    <property type="hits" value="32 hits in 1216 CRISPR screens"/>
</dbReference>
<dbReference type="ChiTaRS" id="CBL">
    <property type="organism name" value="human"/>
</dbReference>
<dbReference type="EvolutionaryTrace" id="P22681"/>
<dbReference type="GeneWiki" id="CBL_(gene)"/>
<dbReference type="GenomeRNAi" id="867"/>
<dbReference type="Pharos" id="P22681">
    <property type="development level" value="Tbio"/>
</dbReference>
<dbReference type="PRO" id="PR:P22681"/>
<dbReference type="Proteomes" id="UP000005640">
    <property type="component" value="Chromosome 11"/>
</dbReference>
<dbReference type="RNAct" id="P22681">
    <property type="molecule type" value="protein"/>
</dbReference>
<dbReference type="Bgee" id="ENSG00000110395">
    <property type="expression patterns" value="Expressed in primordial germ cell in gonad and 187 other cell types or tissues"/>
</dbReference>
<dbReference type="ExpressionAtlas" id="P22681">
    <property type="expression patterns" value="baseline and differential"/>
</dbReference>
<dbReference type="GO" id="GO:0005929">
    <property type="term" value="C:cilium"/>
    <property type="evidence" value="ECO:0000314"/>
    <property type="project" value="UniProtKB"/>
</dbReference>
<dbReference type="GO" id="GO:0005829">
    <property type="term" value="C:cytosol"/>
    <property type="evidence" value="ECO:0000314"/>
    <property type="project" value="HPA"/>
</dbReference>
<dbReference type="GO" id="GO:0016600">
    <property type="term" value="C:flotillin complex"/>
    <property type="evidence" value="ECO:0000250"/>
    <property type="project" value="BHF-UCL"/>
</dbReference>
<dbReference type="GO" id="GO:0005925">
    <property type="term" value="C:focal adhesion"/>
    <property type="evidence" value="ECO:0007669"/>
    <property type="project" value="Ensembl"/>
</dbReference>
<dbReference type="GO" id="GO:0005794">
    <property type="term" value="C:Golgi apparatus"/>
    <property type="evidence" value="ECO:0000314"/>
    <property type="project" value="UniProtKB"/>
</dbReference>
<dbReference type="GO" id="GO:0030426">
    <property type="term" value="C:growth cone"/>
    <property type="evidence" value="ECO:0007669"/>
    <property type="project" value="Ensembl"/>
</dbReference>
<dbReference type="GO" id="GO:0045121">
    <property type="term" value="C:membrane raft"/>
    <property type="evidence" value="ECO:0000318"/>
    <property type="project" value="GO_Central"/>
</dbReference>
<dbReference type="GO" id="GO:0048471">
    <property type="term" value="C:perinuclear region of cytoplasm"/>
    <property type="evidence" value="ECO:0007669"/>
    <property type="project" value="Ensembl"/>
</dbReference>
<dbReference type="GO" id="GO:0005886">
    <property type="term" value="C:plasma membrane"/>
    <property type="evidence" value="ECO:0000314"/>
    <property type="project" value="HGNC-UCL"/>
</dbReference>
<dbReference type="GO" id="GO:0045296">
    <property type="term" value="F:cadherin binding"/>
    <property type="evidence" value="ECO:0007005"/>
    <property type="project" value="BHF-UCL"/>
</dbReference>
<dbReference type="GO" id="GO:0005509">
    <property type="term" value="F:calcium ion binding"/>
    <property type="evidence" value="ECO:0007669"/>
    <property type="project" value="InterPro"/>
</dbReference>
<dbReference type="GO" id="GO:0046875">
    <property type="term" value="F:ephrin receptor binding"/>
    <property type="evidence" value="ECO:0000353"/>
    <property type="project" value="UniProtKB"/>
</dbReference>
<dbReference type="GO" id="GO:0036312">
    <property type="term" value="F:phosphatidylinositol 3-kinase regulatory subunit binding"/>
    <property type="evidence" value="ECO:0007669"/>
    <property type="project" value="Ensembl"/>
</dbReference>
<dbReference type="GO" id="GO:0001784">
    <property type="term" value="F:phosphotyrosine residue binding"/>
    <property type="evidence" value="ECO:0007669"/>
    <property type="project" value="InterPro"/>
</dbReference>
<dbReference type="GO" id="GO:0030971">
    <property type="term" value="F:receptor tyrosine kinase binding"/>
    <property type="evidence" value="ECO:0000318"/>
    <property type="project" value="GO_Central"/>
</dbReference>
<dbReference type="GO" id="GO:0017124">
    <property type="term" value="F:SH3 domain binding"/>
    <property type="evidence" value="ECO:0000353"/>
    <property type="project" value="BHF-UCL"/>
</dbReference>
<dbReference type="GO" id="GO:0061630">
    <property type="term" value="F:ubiquitin protein ligase activity"/>
    <property type="evidence" value="ECO:0000318"/>
    <property type="project" value="GO_Central"/>
</dbReference>
<dbReference type="GO" id="GO:0004842">
    <property type="term" value="F:ubiquitin-protein transferase activity"/>
    <property type="evidence" value="ECO:0000304"/>
    <property type="project" value="HGNC-UCL"/>
</dbReference>
<dbReference type="GO" id="GO:0008270">
    <property type="term" value="F:zinc ion binding"/>
    <property type="evidence" value="ECO:0007669"/>
    <property type="project" value="UniProtKB-KW"/>
</dbReference>
<dbReference type="GO" id="GO:0071456">
    <property type="term" value="P:cellular response to hypoxia"/>
    <property type="evidence" value="ECO:0007669"/>
    <property type="project" value="Ensembl"/>
</dbReference>
<dbReference type="GO" id="GO:1990090">
    <property type="term" value="P:cellular response to nerve growth factor stimulus"/>
    <property type="evidence" value="ECO:0007669"/>
    <property type="project" value="Ensembl"/>
</dbReference>
<dbReference type="GO" id="GO:0036120">
    <property type="term" value="P:cellular response to platelet-derived growth factor stimulus"/>
    <property type="evidence" value="ECO:0007669"/>
    <property type="project" value="Ensembl"/>
</dbReference>
<dbReference type="GO" id="GO:0019221">
    <property type="term" value="P:cytokine-mediated signaling pathway"/>
    <property type="evidence" value="ECO:0000304"/>
    <property type="project" value="Reactome"/>
</dbReference>
<dbReference type="GO" id="GO:0006974">
    <property type="term" value="P:DNA damage response"/>
    <property type="evidence" value="ECO:0007669"/>
    <property type="project" value="Ensembl"/>
</dbReference>
<dbReference type="GO" id="GO:0008584">
    <property type="term" value="P:male gonad development"/>
    <property type="evidence" value="ECO:0007669"/>
    <property type="project" value="Ensembl"/>
</dbReference>
<dbReference type="GO" id="GO:0043303">
    <property type="term" value="P:mast cell degranulation"/>
    <property type="evidence" value="ECO:0007669"/>
    <property type="project" value="Ensembl"/>
</dbReference>
<dbReference type="GO" id="GO:0043066">
    <property type="term" value="P:negative regulation of apoptotic process"/>
    <property type="evidence" value="ECO:0000315"/>
    <property type="project" value="UniProtKB"/>
</dbReference>
<dbReference type="GO" id="GO:0042059">
    <property type="term" value="P:negative regulation of epidermal growth factor receptor signaling pathway"/>
    <property type="evidence" value="ECO:0000315"/>
    <property type="project" value="UniProtKB"/>
</dbReference>
<dbReference type="GO" id="GO:0045742">
    <property type="term" value="P:positive regulation of epidermal growth factor receptor signaling pathway"/>
    <property type="evidence" value="ECO:0000304"/>
    <property type="project" value="Reactome"/>
</dbReference>
<dbReference type="GO" id="GO:0051897">
    <property type="term" value="P:positive regulation of phosphatidylinositol 3-kinase/protein kinase B signal transduction"/>
    <property type="evidence" value="ECO:0000315"/>
    <property type="project" value="BHF-UCL"/>
</dbReference>
<dbReference type="GO" id="GO:0048260">
    <property type="term" value="P:positive regulation of receptor-mediated endocytosis"/>
    <property type="evidence" value="ECO:0000315"/>
    <property type="project" value="UniProtKB"/>
</dbReference>
<dbReference type="GO" id="GO:0051865">
    <property type="term" value="P:protein autoubiquitination"/>
    <property type="evidence" value="ECO:0007669"/>
    <property type="project" value="Ensembl"/>
</dbReference>
<dbReference type="GO" id="GO:0006513">
    <property type="term" value="P:protein monoubiquitination"/>
    <property type="evidence" value="ECO:0007669"/>
    <property type="project" value="Ensembl"/>
</dbReference>
<dbReference type="GO" id="GO:0000209">
    <property type="term" value="P:protein polyubiquitination"/>
    <property type="evidence" value="ECO:0007669"/>
    <property type="project" value="Ensembl"/>
</dbReference>
<dbReference type="GO" id="GO:0016567">
    <property type="term" value="P:protein ubiquitination"/>
    <property type="evidence" value="ECO:0000314"/>
    <property type="project" value="UniProtKB"/>
</dbReference>
<dbReference type="GO" id="GO:2000583">
    <property type="term" value="P:regulation of platelet-derived growth factor receptor-alpha signaling pathway"/>
    <property type="evidence" value="ECO:0000250"/>
    <property type="project" value="UniProtKB"/>
</dbReference>
<dbReference type="GO" id="GO:0032487">
    <property type="term" value="P:regulation of Rap protein signal transduction"/>
    <property type="evidence" value="ECO:0007669"/>
    <property type="project" value="Ensembl"/>
</dbReference>
<dbReference type="GO" id="GO:0014823">
    <property type="term" value="P:response to activity"/>
    <property type="evidence" value="ECO:0007669"/>
    <property type="project" value="Ensembl"/>
</dbReference>
<dbReference type="GO" id="GO:0045471">
    <property type="term" value="P:response to ethanol"/>
    <property type="evidence" value="ECO:0007669"/>
    <property type="project" value="Ensembl"/>
</dbReference>
<dbReference type="GO" id="GO:0010332">
    <property type="term" value="P:response to gamma radiation"/>
    <property type="evidence" value="ECO:0007669"/>
    <property type="project" value="Ensembl"/>
</dbReference>
<dbReference type="GO" id="GO:0042594">
    <property type="term" value="P:response to starvation"/>
    <property type="evidence" value="ECO:0007669"/>
    <property type="project" value="Ensembl"/>
</dbReference>
<dbReference type="GO" id="GO:0033574">
    <property type="term" value="P:response to testosterone"/>
    <property type="evidence" value="ECO:0007669"/>
    <property type="project" value="Ensembl"/>
</dbReference>
<dbReference type="GO" id="GO:0007165">
    <property type="term" value="P:signal transduction"/>
    <property type="evidence" value="ECO:0000318"/>
    <property type="project" value="GO_Central"/>
</dbReference>
<dbReference type="GO" id="GO:0046718">
    <property type="term" value="P:symbiont entry into host cell"/>
    <property type="evidence" value="ECO:0000304"/>
    <property type="project" value="Reactome"/>
</dbReference>
<dbReference type="GO" id="GO:0070086">
    <property type="term" value="P:ubiquitin-dependent endocytosis"/>
    <property type="evidence" value="ECO:0007669"/>
    <property type="project" value="Ensembl"/>
</dbReference>
<dbReference type="GO" id="GO:0006511">
    <property type="term" value="P:ubiquitin-dependent protein catabolic process"/>
    <property type="evidence" value="ECO:0000315"/>
    <property type="project" value="UniProtKB"/>
</dbReference>
<dbReference type="CDD" id="cd16708">
    <property type="entry name" value="RING-HC_Cbl"/>
    <property type="match status" value="1"/>
</dbReference>
<dbReference type="CDD" id="cd09920">
    <property type="entry name" value="SH2_Cbl-b_TKB"/>
    <property type="match status" value="1"/>
</dbReference>
<dbReference type="CDD" id="cd14393">
    <property type="entry name" value="UBA_c-Cbl"/>
    <property type="match status" value="1"/>
</dbReference>
<dbReference type="FunFam" id="1.10.238.10:FF:000022">
    <property type="entry name" value="E3 ubiquitin-protein ligase CBL"/>
    <property type="match status" value="1"/>
</dbReference>
<dbReference type="FunFam" id="1.10.8.10:FF:000030">
    <property type="entry name" value="E3 ubiquitin-protein ligase CBL"/>
    <property type="match status" value="1"/>
</dbReference>
<dbReference type="FunFam" id="1.20.930.20:FF:000001">
    <property type="entry name" value="E3 ubiquitin-protein ligase CBL"/>
    <property type="match status" value="1"/>
</dbReference>
<dbReference type="FunFam" id="3.30.40.10:FF:000015">
    <property type="entry name" value="E3 ubiquitin-protein ligase CBL"/>
    <property type="match status" value="1"/>
</dbReference>
<dbReference type="FunFam" id="3.30.505.10:FF:000154">
    <property type="entry name" value="E3 ubiquitin-protein ligase CBL"/>
    <property type="match status" value="1"/>
</dbReference>
<dbReference type="Gene3D" id="1.20.930.20">
    <property type="entry name" value="Adaptor protein Cbl, N-terminal domain"/>
    <property type="match status" value="1"/>
</dbReference>
<dbReference type="Gene3D" id="1.10.8.10">
    <property type="entry name" value="DNA helicase RuvA subunit, C-terminal domain"/>
    <property type="match status" value="1"/>
</dbReference>
<dbReference type="Gene3D" id="1.10.238.10">
    <property type="entry name" value="EF-hand"/>
    <property type="match status" value="1"/>
</dbReference>
<dbReference type="Gene3D" id="3.30.505.10">
    <property type="entry name" value="SH2 domain"/>
    <property type="match status" value="1"/>
</dbReference>
<dbReference type="Gene3D" id="3.30.40.10">
    <property type="entry name" value="Zinc/RING finger domain, C3HC4 (zinc finger)"/>
    <property type="match status" value="1"/>
</dbReference>
<dbReference type="IDEAL" id="IID00300"/>
<dbReference type="InterPro" id="IPR024162">
    <property type="entry name" value="Adaptor_Cbl"/>
</dbReference>
<dbReference type="InterPro" id="IPR014741">
    <property type="entry name" value="Adaptor_Cbl_EF_hand-like"/>
</dbReference>
<dbReference type="InterPro" id="IPR036537">
    <property type="entry name" value="Adaptor_Cbl_N_dom_sf"/>
</dbReference>
<dbReference type="InterPro" id="IPR003153">
    <property type="entry name" value="Adaptor_Cbl_N_hlx"/>
</dbReference>
<dbReference type="InterPro" id="IPR014742">
    <property type="entry name" value="Adaptor_Cbl_SH2-like"/>
</dbReference>
<dbReference type="InterPro" id="IPR024159">
    <property type="entry name" value="Cbl_PTB"/>
</dbReference>
<dbReference type="InterPro" id="IPR011992">
    <property type="entry name" value="EF-hand-dom_pair"/>
</dbReference>
<dbReference type="InterPro" id="IPR036860">
    <property type="entry name" value="SH2_dom_sf"/>
</dbReference>
<dbReference type="InterPro" id="IPR015940">
    <property type="entry name" value="UBA"/>
</dbReference>
<dbReference type="InterPro" id="IPR009060">
    <property type="entry name" value="UBA-like_sf"/>
</dbReference>
<dbReference type="InterPro" id="IPR018957">
    <property type="entry name" value="Znf_C3HC4_RING-type"/>
</dbReference>
<dbReference type="InterPro" id="IPR001841">
    <property type="entry name" value="Znf_RING"/>
</dbReference>
<dbReference type="InterPro" id="IPR013083">
    <property type="entry name" value="Znf_RING/FYVE/PHD"/>
</dbReference>
<dbReference type="InterPro" id="IPR017907">
    <property type="entry name" value="Znf_RING_CS"/>
</dbReference>
<dbReference type="PANTHER" id="PTHR23007">
    <property type="entry name" value="CBL"/>
    <property type="match status" value="1"/>
</dbReference>
<dbReference type="PANTHER" id="PTHR23007:SF5">
    <property type="entry name" value="E3 UBIQUITIN-PROTEIN LIGASE CBL"/>
    <property type="match status" value="1"/>
</dbReference>
<dbReference type="Pfam" id="PF02262">
    <property type="entry name" value="Cbl_N"/>
    <property type="match status" value="1"/>
</dbReference>
<dbReference type="Pfam" id="PF02761">
    <property type="entry name" value="Cbl_N2"/>
    <property type="match status" value="1"/>
</dbReference>
<dbReference type="Pfam" id="PF02762">
    <property type="entry name" value="Cbl_N3"/>
    <property type="match status" value="1"/>
</dbReference>
<dbReference type="Pfam" id="PF00627">
    <property type="entry name" value="UBA"/>
    <property type="match status" value="1"/>
</dbReference>
<dbReference type="Pfam" id="PF00097">
    <property type="entry name" value="zf-C3HC4"/>
    <property type="match status" value="1"/>
</dbReference>
<dbReference type="SMART" id="SM00184">
    <property type="entry name" value="RING"/>
    <property type="match status" value="1"/>
</dbReference>
<dbReference type="SMART" id="SM00165">
    <property type="entry name" value="UBA"/>
    <property type="match status" value="1"/>
</dbReference>
<dbReference type="SUPFAM" id="SSF47473">
    <property type="entry name" value="EF-hand"/>
    <property type="match status" value="1"/>
</dbReference>
<dbReference type="SUPFAM" id="SSF47668">
    <property type="entry name" value="N-terminal domain of cbl (N-cbl)"/>
    <property type="match status" value="1"/>
</dbReference>
<dbReference type="SUPFAM" id="SSF57850">
    <property type="entry name" value="RING/U-box"/>
    <property type="match status" value="1"/>
</dbReference>
<dbReference type="SUPFAM" id="SSF55550">
    <property type="entry name" value="SH2 domain"/>
    <property type="match status" value="1"/>
</dbReference>
<dbReference type="SUPFAM" id="SSF46934">
    <property type="entry name" value="UBA-like"/>
    <property type="match status" value="1"/>
</dbReference>
<dbReference type="PROSITE" id="PS51506">
    <property type="entry name" value="CBL_PTB"/>
    <property type="match status" value="1"/>
</dbReference>
<dbReference type="PROSITE" id="PS50030">
    <property type="entry name" value="UBA"/>
    <property type="match status" value="1"/>
</dbReference>
<dbReference type="PROSITE" id="PS00518">
    <property type="entry name" value="ZF_RING_1"/>
    <property type="match status" value="1"/>
</dbReference>
<dbReference type="PROSITE" id="PS50089">
    <property type="entry name" value="ZF_RING_2"/>
    <property type="match status" value="1"/>
</dbReference>
<name>CBL_HUMAN</name>
<protein>
    <recommendedName>
        <fullName>E3 ubiquitin-protein ligase CBL</fullName>
        <ecNumber evidence="11 21 28">2.3.2.27</ecNumber>
    </recommendedName>
    <alternativeName>
        <fullName>Casitas B-lineage lymphoma proto-oncogene</fullName>
    </alternativeName>
    <alternativeName>
        <fullName>Proto-oncogene c-Cbl</fullName>
    </alternativeName>
    <alternativeName>
        <fullName>RING finger protein 55</fullName>
    </alternativeName>
    <alternativeName>
        <fullName evidence="53">RING-type E3 ubiquitin transferase CBL</fullName>
    </alternativeName>
    <alternativeName>
        <fullName>Signal transduction protein CBL</fullName>
    </alternativeName>
</protein>
<proteinExistence type="evidence at protein level"/>
<sequence length="906" mass="99633">MAGNVKKSSGAGGGSGSGGSGSGGLIGLMKDAFQPHHHHHHHLSPHPPGTVDKKMVEKCWKLMDKVVRLCQNPKLALKNSPPYILDLLPDTYQHLRTILSRYEGKMETLGENEYFRVFMENLMKKTKQTISLFKEGKERMYEENSQPRRNLTKLSLIFSHMLAELKGIFPSGLFQGDTFRITKADAAEFWRKAFGEKTIVPWKSFRQALHEVHPISSGLEAMALKSTIDLTCNDYISVFEFDIFTRLFQPWSSLLRNWNSLAVTHPGYMAFLTYDEVKARLQKFIHKPGSYIFRLSCTRLGQWAIGYVTADGNILQTIPHNKPLFQALIDGFREGFYLFPDGRNQNPDLTGLCEPTPQDHIKVTQEQYELYCEMGSTFQLCKICAENDKDVKIEPCGHLMCTSCLTSWQESEGQGCPFCRCEIKGTEPIVVDPFDPRGSGSLLRQGAEGAPSPNYDDDDDERADDTLFMMKELAGAKVERPPSPFSMAPQASLPPVPPRLDLLPQRVCVPSSASALGTASKAASGSLHKDKPLPVPPTLRDLPPPPPPDRPYSVGAESRPQRRPLPCTPGDCPSRDKLPPVPSSRLGDSWLPRPIPKVPVSAPSSSDPWTGRELTNRHSLPFSLPSQMEPRPDVPRLGSTFSLDTSMSMNSSPLVGPECDHPKIKPSSSANAIYSLAARPLPVPKLPPGEQCEGEEDTEYMTPSSRPLRPLDTSQSSRACDCDQQIDSCTYEAMYNIQSQAPSITESSTFGEGNLAAAHANTGPEESENEDDGYDVPKPPVPAVLARRTLSDISNASSSFGWLSLDGDPTTNVTEGSQVPERPPKPFPRRINSERKAGSCQQGSGPAASAATASPQLSSEIENLMSQGYSYQDIQKALVIAQNNIEMAKNILREFVSISSPAHVAT</sequence>
<comment type="function">
    <text evidence="2 11 16 21 22 23 27 28 30 33 34 40 45">E3 ubiquitin-protein ligase that acts as a negative regulator of many signaling pathways by mediating ubiquitination of cell surface receptors (PubMed:10514377, PubMed:11896602, PubMed:14661060, PubMed:14739300, PubMed:15190072, PubMed:17509076, PubMed:18374639, PubMed:19689429, PubMed:21596750, PubMed:28381567). Accepts ubiquitin from specific E2 ubiquitin-conjugating enzymes, and then transfers it to substrates promoting their degradation by the proteasome (PubMed:10514377, PubMed:14661060, PubMed:14739300, PubMed:17094949, PubMed:17509076, PubMed:17974561). Recognizes activated receptor tyrosine kinases, including KIT, FLT1, FGFR1, FGFR2, PDGFRA, PDGFRB, CSF1R, EPHA8 and KDR and mediates their ubiquitination to terminate signaling (PubMed:15190072, PubMed:18374639, PubMed:21596750). Recognizes membrane-bound HCK, SRC and other kinases of the SRC family and mediates their ubiquitination and degradation (PubMed:11896602). Ubiquitinates EGFR and SPRY2 (PubMed:17094949, PubMed:17974561). Ubiquitinates NECTIN1 following association between NECTIN1 and herpes simplex virus 1/HHV-1 envelope glycoprotein D, leading to NECTIN1 removal from cell surface (PubMed:28381567). Participates in signal transduction in hematopoietic cells. Plays an important role in the regulation of osteoblast differentiation and apoptosis (PubMed:15190072, PubMed:18374639). Essential for osteoclastic bone resorption (PubMed:14739300). The 'Tyr-731' phosphorylated form induces the activation and recruitment of phosphatidylinositol 3-kinase to the cell membrane in a signaling pathway that is critical for osteoclast function (PubMed:14739300). May be functionally coupled with the E2 ubiquitin-protein ligase UB2D3. In association with CBLB, required for proper feedback inhibition of ciliary platelet-derived growth factor receptor-alpha (PDGFRA) signaling pathway via ubiquitination and internalization of PDGFRA (By similarity).</text>
</comment>
<comment type="catalytic activity">
    <reaction evidence="11 21 28">
        <text>S-ubiquitinyl-[E2 ubiquitin-conjugating enzyme]-L-cysteine + [acceptor protein]-L-lysine = [E2 ubiquitin-conjugating enzyme]-L-cysteine + N(6)-ubiquitinyl-[acceptor protein]-L-lysine.</text>
        <dbReference type="EC" id="2.3.2.27"/>
    </reaction>
</comment>
<comment type="pathway">
    <text evidence="11 21 28 45">Protein modification; protein ubiquitination.</text>
</comment>
<comment type="subunit">
    <text evidence="2 7 8 9 10 12 13 14 15 16 17 18 19 20 23 24 26 29 30 31 32 33 34 35 37 40 41 42 44 46 48 49 50 52">Forms homodimers; IFT20 promotes the formation of stable homodimers (PubMed:29237719). Interacts (phosphorylated at Tyr-731) with PIK3R1. Associates with NCK via its SH3 domain. The phosphorylated C-terminus interacts with CD2AP via its second SH3 domain. Binds to UBE2L3. Interacts with adapters SLA, SLA2 and with the phosphorylated C-terminus of SH2B2. Interacts with EGFR, SYK and ZAP70 via the highly conserved Cbl-N region. Also interacts with SORBS1 and INPPL1/SHIP2. Interacts with phosphorylated LAT2 (By similarity). Interacts with CBLB (PubMed:29237719). Interacts with ALK, AXL, BLK, FGR and FGFR2. Interacts with CSF1R, EPHB1, FLT1, KDR, PDGFRA and PDGFRB; regulates receptor degradation through ubiquitination. Interacts with HCK and LYN. Interacts with ATX2 (By similarity). Interacts with TEK/TIE2 (tyrosine phosphorylated). Interacts with SH3KBP1 and this interaction is inhibited in the presence of SHKBP1 or ARAP1 (By similarity). Interacts with SIGLEC10 (By similarity). Interacts with IFT20 (PubMed:29237719). Interacts with SPRY2; the interaction inhibits CBL-mediated ubiquitination of EGFR (PubMed:17974561). Interacts (phosphorylated at Tyr-774) with tensin TNS4 (via SH2 domain); the interaction is enhanced in the presence of EGF and reduces interaction of CBL with EGFR (PubMed:23774213). Interacts with EGFR; the interaction is reduced in the presence of TNS4 (PubMed:23774213). Interacts with CD5 (PubMed:23376399). Interacts with CD93 (PubMed:26848865).</text>
</comment>
<comment type="subunit">
    <text evidence="47">(Microbial infection) Interacts with M.tuberculosis LpqN, which influences the balance between intrinsic antibacterial and antiviral defense.</text>
</comment>
<comment type="interaction">
    <interactant intactId="EBI-518228">
        <id>P22681</id>
    </interactant>
    <interactant intactId="EBI-7358775">
        <id>Q8IZP0-2</id>
        <label>ABI1</label>
    </interactant>
    <organismsDiffer>false</organismsDiffer>
    <experiments>3</experiments>
</comment>
<comment type="interaction">
    <interactant intactId="EBI-518228">
        <id>P22681</id>
    </interactant>
    <interactant intactId="EBI-717515">
        <id>Q14155</id>
        <label>ARHGEF7</label>
    </interactant>
    <organismsDiffer>false</organismsDiffer>
    <experiments>9</experiments>
</comment>
<comment type="interaction">
    <interactant intactId="EBI-518228">
        <id>P22681</id>
    </interactant>
    <interactant intactId="EBI-930964">
        <id>P54253</id>
        <label>ATXN1</label>
    </interactant>
    <organismsDiffer>false</organismsDiffer>
    <experiments>3</experiments>
</comment>
<comment type="interaction">
    <interactant intactId="EBI-518228">
        <id>P22681</id>
    </interactant>
    <interactant intactId="EBI-298152">
        <id>Q9Y5K6</id>
        <label>CD2AP</label>
    </interactant>
    <organismsDiffer>false</organismsDiffer>
    <experiments>4</experiments>
</comment>
<comment type="interaction">
    <interactant intactId="EBI-518228">
        <id>P22681</id>
    </interactant>
    <interactant intactId="EBI-886">
        <id>P46108</id>
        <label>CRK</label>
    </interactant>
    <organismsDiffer>false</organismsDiffer>
    <experiments>11</experiments>
</comment>
<comment type="interaction">
    <interactant intactId="EBI-518228">
        <id>P22681</id>
    </interactant>
    <interactant intactId="EBI-910">
        <id>P46109</id>
        <label>CRKL</label>
    </interactant>
    <organismsDiffer>false</organismsDiffer>
    <experiments>4</experiments>
</comment>
<comment type="interaction">
    <interactant intactId="EBI-518228">
        <id>P22681</id>
    </interactant>
    <interactant intactId="EBI-297353">
        <id>P00533</id>
        <label>EGFR</label>
    </interactant>
    <organismsDiffer>false</organismsDiffer>
    <experiments>22</experiments>
</comment>
<comment type="interaction">
    <interactant intactId="EBI-518228">
        <id>P22681</id>
    </interactant>
    <interactant intactId="EBI-4303189">
        <id>P55085</id>
        <label>F2RL1</label>
    </interactant>
    <organismsDiffer>false</organismsDiffer>
    <experiments>3</experiments>
</comment>
<comment type="interaction">
    <interactant intactId="EBI-518228">
        <id>P22681</id>
    </interactant>
    <interactant intactId="EBI-1026718">
        <id>P17948</id>
        <label>FLT1</label>
    </interactant>
    <organismsDiffer>false</organismsDiffer>
    <experiments>2</experiments>
</comment>
<comment type="interaction">
    <interactant intactId="EBI-518228">
        <id>P22681</id>
    </interactant>
    <interactant intactId="EBI-401755">
        <id>P62993</id>
        <label>GRB2</label>
    </interactant>
    <organismsDiffer>false</organismsDiffer>
    <experiments>14</experiments>
</comment>
<comment type="interaction">
    <interactant intactId="EBI-518228">
        <id>P22681</id>
    </interactant>
    <interactant intactId="EBI-9834454">
        <id>P08631-2</id>
        <label>HCK</label>
    </interactant>
    <organismsDiffer>false</organismsDiffer>
    <experiments>2</experiments>
</comment>
<comment type="interaction">
    <interactant intactId="EBI-518228">
        <id>P22681</id>
    </interactant>
    <interactant intactId="EBI-466029">
        <id>P42858</id>
        <label>HTT</label>
    </interactant>
    <organismsDiffer>false</organismsDiffer>
    <experiments>18</experiments>
</comment>
<comment type="interaction">
    <interactant intactId="EBI-518228">
        <id>P22681</id>
    </interactant>
    <interactant intactId="EBI-602041">
        <id>Q15811</id>
        <label>ITSN1</label>
    </interactant>
    <organismsDiffer>false</organismsDiffer>
    <experiments>12</experiments>
</comment>
<comment type="interaction">
    <interactant intactId="EBI-518228">
        <id>P22681</id>
    </interactant>
    <interactant intactId="EBI-2865191">
        <id>Q96JA1</id>
        <label>LRIG1</label>
    </interactant>
    <organismsDiffer>false</organismsDiffer>
    <experiments>2</experiments>
</comment>
<comment type="interaction">
    <interactant intactId="EBI-518228">
        <id>P22681</id>
    </interactant>
    <interactant intactId="EBI-286483">
        <id>P45983</id>
        <label>MAPK8</label>
    </interactant>
    <organismsDiffer>false</organismsDiffer>
    <experiments>2</experiments>
</comment>
<comment type="interaction">
    <interactant intactId="EBI-518228">
        <id>P22681</id>
    </interactant>
    <interactant intactId="EBI-1039152">
        <id>P08581</id>
        <label>MET</label>
    </interactant>
    <organismsDiffer>false</organismsDiffer>
    <experiments>15</experiments>
</comment>
<comment type="interaction">
    <interactant intactId="EBI-518228">
        <id>P22681</id>
    </interactant>
    <interactant intactId="EBI-1028226">
        <id>P04629</id>
        <label>NTRK1</label>
    </interactant>
    <organismsDiffer>false</organismsDiffer>
    <experiments>2</experiments>
</comment>
<comment type="interaction">
    <interactant intactId="EBI-518228">
        <id>P22681</id>
    </interactant>
    <interactant intactId="EBI-79464">
        <id>P27986</id>
        <label>PIK3R1</label>
    </interactant>
    <organismsDiffer>false</organismsDiffer>
    <experiments>5</experiments>
</comment>
<comment type="interaction">
    <interactant intactId="EBI-518228">
        <id>P22681</id>
    </interactant>
    <interactant intactId="EBI-346930">
        <id>O00459</id>
        <label>PIK3R2</label>
    </interactant>
    <organismsDiffer>false</organismsDiffer>
    <experiments>4</experiments>
</comment>
<comment type="interaction">
    <interactant intactId="EBI-518228">
        <id>P22681</id>
    </interactant>
    <interactant intactId="EBI-79893">
        <id>Q92569</id>
        <label>PIK3R3</label>
    </interactant>
    <organismsDiffer>false</organismsDiffer>
    <experiments>4</experiments>
</comment>
<comment type="interaction">
    <interactant intactId="EBI-518228">
        <id>P22681</id>
    </interactant>
    <interactant intactId="EBI-476295">
        <id>P31947</id>
        <label>SFN</label>
    </interactant>
    <organismsDiffer>false</organismsDiffer>
    <experiments>2</experiments>
</comment>
<comment type="interaction">
    <interactant intactId="EBI-518228">
        <id>P22681</id>
    </interactant>
    <interactant intactId="EBI-7507432">
        <id>O14492</id>
        <label>SH2B2</label>
    </interactant>
    <organismsDiffer>false</organismsDiffer>
    <experiments>7</experiments>
</comment>
<comment type="interaction">
    <interactant intactId="EBI-518228">
        <id>P22681</id>
    </interactant>
    <interactant intactId="EBI-346595">
        <id>Q96B97</id>
        <label>SH3KBP1</label>
    </interactant>
    <organismsDiffer>false</organismsDiffer>
    <experiments>21</experiments>
</comment>
<comment type="interaction">
    <interactant intactId="EBI-518228">
        <id>P22681</id>
    </interactant>
    <interactant intactId="EBI-742487">
        <id>O43597</id>
        <label>SPRY2</label>
    </interactant>
    <organismsDiffer>false</organismsDiffer>
    <experiments>17</experiments>
</comment>
<comment type="interaction">
    <interactant intactId="EBI-518228">
        <id>P22681</id>
    </interactant>
    <interactant intactId="EBI-354861">
        <id>Q9C004</id>
        <label>SPRY4</label>
    </interactant>
    <organismsDiffer>false</organismsDiffer>
    <experiments>9</experiments>
</comment>
<comment type="interaction">
    <interactant intactId="EBI-518228">
        <id>P22681</id>
    </interactant>
    <interactant intactId="EBI-621482">
        <id>P12931</id>
        <label>SRC</label>
    </interactant>
    <organismsDiffer>false</organismsDiffer>
    <experiments>8</experiments>
</comment>
<comment type="interaction">
    <interactant intactId="EBI-518228">
        <id>P22681</id>
    </interactant>
    <interactant intactId="EBI-78302">
        <id>P43405</id>
        <label>SYK</label>
    </interactant>
    <organismsDiffer>false</organismsDiffer>
    <experiments>2</experiments>
</comment>
<comment type="interaction">
    <interactant intactId="EBI-518228">
        <id>P22681</id>
    </interactant>
    <interactant intactId="EBI-347677">
        <id>P62837</id>
        <label>UBE2D2</label>
    </interactant>
    <organismsDiffer>false</organismsDiffer>
    <experiments>4</experiments>
</comment>
<comment type="interaction">
    <interactant intactId="EBI-518228">
        <id>P22681</id>
    </interactant>
    <interactant intactId="EBI-359815">
        <id>P31946</id>
        <label>YWHAB</label>
    </interactant>
    <organismsDiffer>false</organismsDiffer>
    <experiments>5</experiments>
</comment>
<comment type="interaction">
    <interactant intactId="EBI-518228">
        <id>P22681</id>
    </interactant>
    <interactant intactId="EBI-356498">
        <id>P62258</id>
        <label>YWHAE</label>
    </interactant>
    <organismsDiffer>false</organismsDiffer>
    <experiments>6</experiments>
</comment>
<comment type="interaction">
    <interactant intactId="EBI-518228">
        <id>P22681</id>
    </interactant>
    <interactant intactId="EBI-359832">
        <id>P61981</id>
        <label>YWHAG</label>
    </interactant>
    <organismsDiffer>false</organismsDiffer>
    <experiments>5</experiments>
</comment>
<comment type="interaction">
    <interactant intactId="EBI-518228">
        <id>P22681</id>
    </interactant>
    <interactant intactId="EBI-306940">
        <id>Q04917</id>
        <label>YWHAH</label>
    </interactant>
    <organismsDiffer>false</organismsDiffer>
    <experiments>5</experiments>
</comment>
<comment type="interaction">
    <interactant intactId="EBI-518228">
        <id>P22681</id>
    </interactant>
    <interactant intactId="EBI-359854">
        <id>P27348</id>
        <label>YWHAQ</label>
    </interactant>
    <organismsDiffer>false</organismsDiffer>
    <experiments>7</experiments>
</comment>
<comment type="interaction">
    <interactant intactId="EBI-518228">
        <id>P22681</id>
    </interactant>
    <interactant intactId="EBI-347088">
        <id>P63104</id>
        <label>YWHAZ</label>
    </interactant>
    <organismsDiffer>false</organismsDiffer>
    <experiments>4</experiments>
</comment>
<comment type="interaction">
    <interactant intactId="EBI-518228">
        <id>P22681</id>
    </interactant>
    <interactant intactId="EBI-1211276">
        <id>P43403</id>
        <label>ZAP70</label>
    </interactant>
    <organismsDiffer>false</organismsDiffer>
    <experiments>3</experiments>
</comment>
<comment type="interaction">
    <interactant intactId="EBI-518228">
        <id>P22681</id>
    </interactant>
    <interactant intactId="EBI-524514">
        <id>P39688</id>
        <label>Fyn</label>
    </interactant>
    <organismsDiffer>true</organismsDiffer>
    <experiments>3</experiments>
</comment>
<comment type="interaction">
    <interactant intactId="EBI-518228">
        <id>P22681</id>
    </interactant>
    <interactant intactId="EBI-25401182">
        <id>A0A0H3L6J6</id>
        <label>lpqN</label>
    </interactant>
    <organismsDiffer>true</organismsDiffer>
    <experiments>3</experiments>
</comment>
<comment type="interaction">
    <interactant intactId="EBI-518228">
        <id>P22681</id>
    </interactant>
    <interactant intactId="EBI-15628084">
        <id>F1SDV6</id>
        <label>PLCG1</label>
    </interactant>
    <organismsDiffer>true</organismsDiffer>
    <experiments>2</experiments>
</comment>
<comment type="interaction">
    <interactant intactId="EBI-518228">
        <id>P22681</id>
    </interactant>
    <interactant intactId="EBI-8013886">
        <id>P08487</id>
        <label>PLCG1</label>
    </interactant>
    <organismsDiffer>true</organismsDiffer>
    <experiments>3</experiments>
</comment>
<comment type="subcellular location">
    <subcellularLocation>
        <location>Cytoplasm</location>
    </subcellularLocation>
    <subcellularLocation>
        <location>Cell membrane</location>
    </subcellularLocation>
    <subcellularLocation>
        <location evidence="46">Cell projection</location>
        <location evidence="46">Cilium</location>
    </subcellularLocation>
    <subcellularLocation>
        <location evidence="46">Golgi apparatus</location>
    </subcellularLocation>
    <text>Colocalizes with FGFR2 in lipid rafts at the cell membrane.</text>
</comment>
<comment type="domain">
    <text>The RING-type zinc finger domain mediates binding to an E2 ubiquitin-conjugating enzyme.</text>
</comment>
<comment type="domain">
    <text>The N-terminus is composed of the phosphotyrosine binding (PTB) domain, a short linker region and the RING-type zinc finger. The PTB domain, which is also called TKB (tyrosine kinase binding) domain, is composed of three different subdomains: a four-helix bundle (4H), a calcium-binding EF hand and a divergent SH2 domain.</text>
</comment>
<comment type="PTM">
    <text evidence="1 8 15 17 18 22 23 24 25 28 31 37 39 44 48 51">Phosphorylated on tyrosine residues by ALK, EGFR, SYK, FYN and ZAP70 (By similarity). Phosphorylated on tyrosine residues in response to FLT1 and KIT signaling. Phosphorylated on tyrosine residues by INSR and FGR. Phosphorylated on several tyrosine residues by constitutively activated FGFR3. Not phosphorylated at Tyr-731 by FGFR3. Phosphorylated on tyrosine residues by activated CSF1R, PDGFRA and PDGFRB. Phosphorylated on tyrosine residues by HCK.</text>
</comment>
<comment type="PTM">
    <text evidence="16 36 46">Ubiquitinated, leading to its degradation via the proteasome (PubMed:11896602, PubMed:20094046). Ubiquitination is negatively regulated by IFT20 (PubMed:29237719).</text>
</comment>
<comment type="disease" evidence="38 43">
    <disease id="DI-02913">
        <name>Noonan syndrome-like disorder with or without juvenile myelomonocytic leukemia</name>
        <acronym>NSLL</acronym>
        <description>A syndrome characterized by a phenotype reminiscent of Noonan syndrome. Clinical features are highly variable, including facial dysmorphism, short neck, developmental delay, hyperextensible joints and thorax abnormalities with widely spaced nipples. The facial features consist of triangular face with hypertelorism, large low-set ears, ptosis, and flat nasal bridge. Some patients manifest cardiac defects. Some have an increased risk for certain malignancies, particularly juvenile myelomonocytic leukemia.</description>
        <dbReference type="MIM" id="613563"/>
    </disease>
    <text>The disease is caused by variants affecting the gene represented in this entry.</text>
</comment>
<comment type="miscellaneous">
    <text>This protein has one functional calcium-binding site.</text>
</comment>
<comment type="online information" name="Atlas of Genetics and Cytogenetics in Oncology and Haematology">
    <link uri="https://atlasgeneticsoncology.org/gene/171/CBL"/>
</comment>
<evidence type="ECO:0000250" key="1"/>
<evidence type="ECO:0000250" key="2">
    <source>
        <dbReference type="UniProtKB" id="P22682"/>
    </source>
</evidence>
<evidence type="ECO:0000255" key="3">
    <source>
        <dbReference type="PROSITE-ProRule" id="PRU00175"/>
    </source>
</evidence>
<evidence type="ECO:0000255" key="4">
    <source>
        <dbReference type="PROSITE-ProRule" id="PRU00212"/>
    </source>
</evidence>
<evidence type="ECO:0000255" key="5">
    <source>
        <dbReference type="PROSITE-ProRule" id="PRU00839"/>
    </source>
</evidence>
<evidence type="ECO:0000256" key="6">
    <source>
        <dbReference type="SAM" id="MobiDB-lite"/>
    </source>
</evidence>
<evidence type="ECO:0000269" key="7">
    <source>
    </source>
</evidence>
<evidence type="ECO:0000269" key="8">
    <source>
    </source>
</evidence>
<evidence type="ECO:0000269" key="9">
    <source>
    </source>
</evidence>
<evidence type="ECO:0000269" key="10">
    <source>
    </source>
</evidence>
<evidence type="ECO:0000269" key="11">
    <source>
    </source>
</evidence>
<evidence type="ECO:0000269" key="12">
    <source>
    </source>
</evidence>
<evidence type="ECO:0000269" key="13">
    <source>
    </source>
</evidence>
<evidence type="ECO:0000269" key="14">
    <source>
    </source>
</evidence>
<evidence type="ECO:0000269" key="15">
    <source>
    </source>
</evidence>
<evidence type="ECO:0000269" key="16">
    <source>
    </source>
</evidence>
<evidence type="ECO:0000269" key="17">
    <source>
    </source>
</evidence>
<evidence type="ECO:0000269" key="18">
    <source>
    </source>
</evidence>
<evidence type="ECO:0000269" key="19">
    <source>
    </source>
</evidence>
<evidence type="ECO:0000269" key="20">
    <source>
    </source>
</evidence>
<evidence type="ECO:0000269" key="21">
    <source>
    </source>
</evidence>
<evidence type="ECO:0000269" key="22">
    <source>
    </source>
</evidence>
<evidence type="ECO:0000269" key="23">
    <source>
    </source>
</evidence>
<evidence type="ECO:0000269" key="24">
    <source>
    </source>
</evidence>
<evidence type="ECO:0000269" key="25">
    <source>
    </source>
</evidence>
<evidence type="ECO:0000269" key="26">
    <source>
    </source>
</evidence>
<evidence type="ECO:0000269" key="27">
    <source>
    </source>
</evidence>
<evidence type="ECO:0000269" key="28">
    <source>
    </source>
</evidence>
<evidence type="ECO:0000269" key="29">
    <source>
    </source>
</evidence>
<evidence type="ECO:0000269" key="30">
    <source>
    </source>
</evidence>
<evidence type="ECO:0000269" key="31">
    <source>
    </source>
</evidence>
<evidence type="ECO:0000269" key="32">
    <source>
    </source>
</evidence>
<evidence type="ECO:0000269" key="33">
    <source>
    </source>
</evidence>
<evidence type="ECO:0000269" key="34">
    <source>
    </source>
</evidence>
<evidence type="ECO:0000269" key="35">
    <source>
    </source>
</evidence>
<evidence type="ECO:0000269" key="36">
    <source>
    </source>
</evidence>
<evidence type="ECO:0000269" key="37">
    <source>
    </source>
</evidence>
<evidence type="ECO:0000269" key="38">
    <source>
    </source>
</evidence>
<evidence type="ECO:0000269" key="39">
    <source>
    </source>
</evidence>
<evidence type="ECO:0000269" key="40">
    <source>
    </source>
</evidence>
<evidence type="ECO:0000269" key="41">
    <source>
    </source>
</evidence>
<evidence type="ECO:0000269" key="42">
    <source>
    </source>
</evidence>
<evidence type="ECO:0000269" key="43">
    <source>
    </source>
</evidence>
<evidence type="ECO:0000269" key="44">
    <source>
    </source>
</evidence>
<evidence type="ECO:0000269" key="45">
    <source>
    </source>
</evidence>
<evidence type="ECO:0000269" key="46">
    <source>
    </source>
</evidence>
<evidence type="ECO:0000269" key="47">
    <source>
    </source>
</evidence>
<evidence type="ECO:0000269" key="48">
    <source>
    </source>
</evidence>
<evidence type="ECO:0000269" key="49">
    <source>
    </source>
</evidence>
<evidence type="ECO:0000269" key="50">
    <source>
    </source>
</evidence>
<evidence type="ECO:0000269" key="51">
    <source>
    </source>
</evidence>
<evidence type="ECO:0000269" key="52">
    <source>
    </source>
</evidence>
<evidence type="ECO:0000305" key="53"/>
<evidence type="ECO:0007744" key="54">
    <source>
        <dbReference type="PDB" id="1B47"/>
    </source>
</evidence>
<evidence type="ECO:0007744" key="55">
    <source>
        <dbReference type="PDB" id="2CBL"/>
    </source>
</evidence>
<evidence type="ECO:0007744" key="56">
    <source>
    </source>
</evidence>
<evidence type="ECO:0007744" key="57">
    <source>
    </source>
</evidence>
<evidence type="ECO:0007744" key="58">
    <source>
    </source>
</evidence>
<evidence type="ECO:0007829" key="59">
    <source>
        <dbReference type="PDB" id="1FBV"/>
    </source>
</evidence>
<evidence type="ECO:0007829" key="60">
    <source>
        <dbReference type="PDB" id="2K4D"/>
    </source>
</evidence>
<evidence type="ECO:0007829" key="61">
    <source>
        <dbReference type="PDB" id="2OO9"/>
    </source>
</evidence>
<evidence type="ECO:0007829" key="62">
    <source>
        <dbReference type="PDB" id="2Y1M"/>
    </source>
</evidence>
<evidence type="ECO:0007829" key="63">
    <source>
        <dbReference type="PDB" id="3BUO"/>
    </source>
</evidence>
<evidence type="ECO:0007829" key="64">
    <source>
        <dbReference type="PDB" id="3BUW"/>
    </source>
</evidence>
<evidence type="ECO:0007829" key="65">
    <source>
        <dbReference type="PDB" id="3BUX"/>
    </source>
</evidence>
<evidence type="ECO:0007829" key="66">
    <source>
        <dbReference type="PDB" id="4A49"/>
    </source>
</evidence>
<evidence type="ECO:0007829" key="67">
    <source>
        <dbReference type="PDB" id="5HKX"/>
    </source>
</evidence>
<evidence type="ECO:0007829" key="68">
    <source>
        <dbReference type="PDB" id="6XAR"/>
    </source>
</evidence>
<evidence type="ECO:0007829" key="69">
    <source>
        <dbReference type="PDB" id="7SIY"/>
    </source>
</evidence>
<accession>P22681</accession>
<accession>A3KMP8</accession>
<gene>
    <name type="primary">CBL</name>
    <name type="synonym">CBL2</name>
    <name type="synonym">RNF55</name>
</gene>